<gene>
    <name evidence="42" type="primary">APOA1</name>
</gene>
<proteinExistence type="evidence at protein level"/>
<name>APOA1_HUMAN</name>
<evidence type="ECO:0000250" key="1"/>
<evidence type="ECO:0000250" key="2">
    <source>
        <dbReference type="UniProtKB" id="G5BQH5"/>
    </source>
</evidence>
<evidence type="ECO:0000269" key="3">
    <source>
    </source>
</evidence>
<evidence type="ECO:0000269" key="4">
    <source>
    </source>
</evidence>
<evidence type="ECO:0000269" key="5">
    <source>
    </source>
</evidence>
<evidence type="ECO:0000269" key="6">
    <source>
    </source>
</evidence>
<evidence type="ECO:0000269" key="7">
    <source>
    </source>
</evidence>
<evidence type="ECO:0000269" key="8">
    <source>
    </source>
</evidence>
<evidence type="ECO:0000269" key="9">
    <source>
    </source>
</evidence>
<evidence type="ECO:0000269" key="10">
    <source>
    </source>
</evidence>
<evidence type="ECO:0000269" key="11">
    <source>
    </source>
</evidence>
<evidence type="ECO:0000269" key="12">
    <source>
    </source>
</evidence>
<evidence type="ECO:0000269" key="13">
    <source>
    </source>
</evidence>
<evidence type="ECO:0000269" key="14">
    <source>
    </source>
</evidence>
<evidence type="ECO:0000269" key="15">
    <source>
    </source>
</evidence>
<evidence type="ECO:0000269" key="16">
    <source>
    </source>
</evidence>
<evidence type="ECO:0000269" key="17">
    <source>
    </source>
</evidence>
<evidence type="ECO:0000269" key="18">
    <source>
    </source>
</evidence>
<evidence type="ECO:0000269" key="19">
    <source>
    </source>
</evidence>
<evidence type="ECO:0000269" key="20">
    <source>
    </source>
</evidence>
<evidence type="ECO:0000269" key="21">
    <source>
    </source>
</evidence>
<evidence type="ECO:0000269" key="22">
    <source>
    </source>
</evidence>
<evidence type="ECO:0000269" key="23">
    <source>
    </source>
</evidence>
<evidence type="ECO:0000269" key="24">
    <source>
    </source>
</evidence>
<evidence type="ECO:0000269" key="25">
    <source>
    </source>
</evidence>
<evidence type="ECO:0000269" key="26">
    <source>
    </source>
</evidence>
<evidence type="ECO:0000269" key="27">
    <source>
    </source>
</evidence>
<evidence type="ECO:0000269" key="28">
    <source>
    </source>
</evidence>
<evidence type="ECO:0000269" key="29">
    <source>
    </source>
</evidence>
<evidence type="ECO:0000269" key="30">
    <source>
    </source>
</evidence>
<evidence type="ECO:0000269" key="31">
    <source>
    </source>
</evidence>
<evidence type="ECO:0000269" key="32">
    <source>
    </source>
</evidence>
<evidence type="ECO:0000269" key="33">
    <source>
    </source>
</evidence>
<evidence type="ECO:0000269" key="34">
    <source>
    </source>
</evidence>
<evidence type="ECO:0000269" key="35">
    <source>
    </source>
</evidence>
<evidence type="ECO:0000269" key="36">
    <source>
    </source>
</evidence>
<evidence type="ECO:0000269" key="37">
    <source>
    </source>
</evidence>
<evidence type="ECO:0000269" key="38">
    <source>
    </source>
</evidence>
<evidence type="ECO:0000269" key="39">
    <source>
    </source>
</evidence>
<evidence type="ECO:0000269" key="40">
    <source ref="63"/>
</evidence>
<evidence type="ECO:0000305" key="41"/>
<evidence type="ECO:0000312" key="42">
    <source>
        <dbReference type="HGNC" id="HGNC:600"/>
    </source>
</evidence>
<evidence type="ECO:0007829" key="43">
    <source>
        <dbReference type="PDB" id="2MSC"/>
    </source>
</evidence>
<evidence type="ECO:0007829" key="44">
    <source>
        <dbReference type="PDB" id="3R2P"/>
    </source>
</evidence>
<evidence type="ECO:0007829" key="45">
    <source>
        <dbReference type="PDB" id="6PTW"/>
    </source>
</evidence>
<evidence type="ECO:0007829" key="46">
    <source>
        <dbReference type="PDB" id="7KJR"/>
    </source>
</evidence>
<protein>
    <recommendedName>
        <fullName evidence="41">Apolipoprotein A-I</fullName>
        <shortName>Apo-AI</shortName>
        <shortName>ApoA-I</shortName>
    </recommendedName>
    <alternativeName>
        <fullName>Apolipoprotein A1</fullName>
    </alternativeName>
    <component>
        <recommendedName>
            <fullName>Proapolipoprotein A-I</fullName>
            <shortName>ProapoA-I</shortName>
        </recommendedName>
    </component>
    <component>
        <recommendedName>
            <fullName>Truncated apolipoprotein A-I</fullName>
        </recommendedName>
        <alternativeName>
            <fullName>Apolipoprotein A-I(1-242)</fullName>
        </alternativeName>
    </component>
</protein>
<dbReference type="EMBL" id="J00098">
    <property type="protein sequence ID" value="AAB59514.1"/>
    <property type="molecule type" value="Genomic_DNA"/>
</dbReference>
<dbReference type="EMBL" id="X01038">
    <property type="protein sequence ID" value="CAA25519.1"/>
    <property type="molecule type" value="Genomic_DNA"/>
</dbReference>
<dbReference type="EMBL" id="X02162">
    <property type="protein sequence ID" value="CAA26097.1"/>
    <property type="molecule type" value="mRNA"/>
</dbReference>
<dbReference type="EMBL" id="X00566">
    <property type="protein sequence ID" value="CAA25232.1"/>
    <property type="molecule type" value="mRNA"/>
</dbReference>
<dbReference type="EMBL" id="M11791">
    <property type="protein sequence ID" value="AAA35545.1"/>
    <property type="molecule type" value="mRNA"/>
</dbReference>
<dbReference type="EMBL" id="X07496">
    <property type="protein sequence ID" value="CAA30377.1"/>
    <property type="molecule type" value="Genomic_DNA"/>
</dbReference>
<dbReference type="EMBL" id="M27875">
    <property type="protein sequence ID" value="AAA62829.1"/>
    <property type="molecule type" value="mRNA"/>
</dbReference>
<dbReference type="EMBL" id="M29068">
    <property type="protein sequence ID" value="AAA51747.1"/>
    <property type="molecule type" value="mRNA"/>
</dbReference>
<dbReference type="EMBL" id="AY422952">
    <property type="protein sequence ID" value="AAQ91811.1"/>
    <property type="molecule type" value="Genomic_DNA"/>
</dbReference>
<dbReference type="EMBL" id="AY555191">
    <property type="protein sequence ID" value="AAS68227.1"/>
    <property type="molecule type" value="Genomic_DNA"/>
</dbReference>
<dbReference type="EMBL" id="A14829">
    <property type="protein sequence ID" value="CAA01198.1"/>
    <property type="molecule type" value="mRNA"/>
</dbReference>
<dbReference type="EMBL" id="AK292231">
    <property type="protein sequence ID" value="BAF84920.1"/>
    <property type="molecule type" value="mRNA"/>
</dbReference>
<dbReference type="EMBL" id="EF444948">
    <property type="protein sequence ID" value="ACA05932.1"/>
    <property type="molecule type" value="Genomic_DNA"/>
</dbReference>
<dbReference type="EMBL" id="EF444948">
    <property type="protein sequence ID" value="ACA05933.1"/>
    <property type="molecule type" value="Genomic_DNA"/>
</dbReference>
<dbReference type="EMBL" id="EF444948">
    <property type="protein sequence ID" value="ACA05934.1"/>
    <property type="molecule type" value="Genomic_DNA"/>
</dbReference>
<dbReference type="EMBL" id="EF444948">
    <property type="protein sequence ID" value="ACA05935.1"/>
    <property type="molecule type" value="Genomic_DNA"/>
</dbReference>
<dbReference type="EMBL" id="EF444948">
    <property type="protein sequence ID" value="ACA05936.1"/>
    <property type="molecule type" value="Genomic_DNA"/>
</dbReference>
<dbReference type="EMBL" id="CH471065">
    <property type="protein sequence ID" value="EAW67274.1"/>
    <property type="molecule type" value="Genomic_DNA"/>
</dbReference>
<dbReference type="EMBL" id="BC005380">
    <property type="protein sequence ID" value="AAH05380.1"/>
    <property type="molecule type" value="mRNA"/>
</dbReference>
<dbReference type="EMBL" id="BC110286">
    <property type="protein sequence ID" value="AAI10287.1"/>
    <property type="molecule type" value="mRNA"/>
</dbReference>
<dbReference type="CCDS" id="CCDS8378.1"/>
<dbReference type="PIR" id="A90947">
    <property type="entry name" value="LPHUA1"/>
</dbReference>
<dbReference type="RefSeq" id="NP_000030.1">
    <property type="nucleotide sequence ID" value="NM_000039.3"/>
</dbReference>
<dbReference type="RefSeq" id="NP_001304946.1">
    <property type="nucleotide sequence ID" value="NM_001318017.2"/>
</dbReference>
<dbReference type="RefSeq" id="NP_001304947.1">
    <property type="nucleotide sequence ID" value="NM_001318018.2"/>
</dbReference>
<dbReference type="RefSeq" id="NP_001304950.1">
    <property type="nucleotide sequence ID" value="NM_001318021.1"/>
</dbReference>
<dbReference type="RefSeq" id="NP_001412019.1">
    <property type="nucleotide sequence ID" value="NM_001425090.1"/>
</dbReference>
<dbReference type="PDB" id="1AV1">
    <property type="method" value="X-ray"/>
    <property type="resolution" value="4.00 A"/>
    <property type="chains" value="A/B/C/D=68-267"/>
</dbReference>
<dbReference type="PDB" id="1GW3">
    <property type="method" value="NMR"/>
    <property type="chains" value="A=166-211"/>
</dbReference>
<dbReference type="PDB" id="1GW4">
    <property type="method" value="NMR"/>
    <property type="chains" value="A=166-211"/>
</dbReference>
<dbReference type="PDB" id="1ODP">
    <property type="method" value="NMR"/>
    <property type="chains" value="A=190-209"/>
</dbReference>
<dbReference type="PDB" id="1ODQ">
    <property type="method" value="NMR"/>
    <property type="chains" value="A=190-209"/>
</dbReference>
<dbReference type="PDB" id="1ODR">
    <property type="method" value="NMR"/>
    <property type="chains" value="A=190-209"/>
</dbReference>
<dbReference type="PDB" id="2MSC">
    <property type="method" value="NMR"/>
    <property type="chains" value="A/C=68-265"/>
</dbReference>
<dbReference type="PDB" id="2MSD">
    <property type="method" value="NMR"/>
    <property type="chains" value="A/C=68-265"/>
</dbReference>
<dbReference type="PDB" id="2MSE">
    <property type="method" value="NMR"/>
    <property type="chains" value="A/C=68-265"/>
</dbReference>
<dbReference type="PDB" id="2N5E">
    <property type="method" value="NMR"/>
    <property type="chains" value="A/B=79-267"/>
</dbReference>
<dbReference type="PDB" id="3K2S">
    <property type="method" value="X-ray"/>
    <property type="chains" value="A/B=25-267"/>
</dbReference>
<dbReference type="PDB" id="3R2P">
    <property type="method" value="X-ray"/>
    <property type="resolution" value="2.20 A"/>
    <property type="chains" value="A=25-208"/>
</dbReference>
<dbReference type="PDB" id="4V6M">
    <property type="method" value="EM"/>
    <property type="resolution" value="7.10 A"/>
    <property type="chains" value="A0/A1=68-267"/>
</dbReference>
<dbReference type="PDB" id="6CC9">
    <property type="method" value="NMR"/>
    <property type="chains" value="A/C=68-265"/>
</dbReference>
<dbReference type="PDB" id="6CCH">
    <property type="method" value="NMR"/>
    <property type="chains" value="A/C=68-265"/>
</dbReference>
<dbReference type="PDB" id="6CCX">
    <property type="method" value="NMR"/>
    <property type="chains" value="A/C=68-265"/>
</dbReference>
<dbReference type="PDB" id="6CLZ">
    <property type="method" value="NMR"/>
    <property type="chains" value="B/C=79-267"/>
</dbReference>
<dbReference type="PDB" id="6CM1">
    <property type="method" value="NMR"/>
    <property type="chains" value="B/C=79-267"/>
</dbReference>
<dbReference type="PDB" id="6PTS">
    <property type="method" value="NMR"/>
    <property type="chains" value="A/C=68-265"/>
</dbReference>
<dbReference type="PDB" id="6PTW">
    <property type="method" value="NMR"/>
    <property type="chains" value="A/C=68-265"/>
</dbReference>
<dbReference type="PDB" id="6W4E">
    <property type="method" value="NMR"/>
    <property type="chains" value="A/D=68-265"/>
</dbReference>
<dbReference type="PDB" id="6W4F">
    <property type="method" value="NMR"/>
    <property type="chains" value="A/D=68-265"/>
</dbReference>
<dbReference type="PDB" id="7KJR">
    <property type="method" value="EM"/>
    <property type="resolution" value="2.08 A"/>
    <property type="chains" value="C/D=79-267"/>
</dbReference>
<dbReference type="PDB" id="7RSC">
    <property type="method" value="NMR"/>
    <property type="chains" value="D/E=68-265"/>
</dbReference>
<dbReference type="PDB" id="7RSE">
    <property type="method" value="NMR"/>
    <property type="chains" value="D/E=68-265"/>
</dbReference>
<dbReference type="PDB" id="8EQS">
    <property type="method" value="EM"/>
    <property type="resolution" value="3.10 A"/>
    <property type="chains" value="C/D=79-267"/>
</dbReference>
<dbReference type="PDBsum" id="1AV1"/>
<dbReference type="PDBsum" id="1GW3"/>
<dbReference type="PDBsum" id="1GW4"/>
<dbReference type="PDBsum" id="1ODP"/>
<dbReference type="PDBsum" id="1ODQ"/>
<dbReference type="PDBsum" id="1ODR"/>
<dbReference type="PDBsum" id="2MSC"/>
<dbReference type="PDBsum" id="2MSD"/>
<dbReference type="PDBsum" id="2MSE"/>
<dbReference type="PDBsum" id="2N5E"/>
<dbReference type="PDBsum" id="3K2S"/>
<dbReference type="PDBsum" id="3R2P"/>
<dbReference type="PDBsum" id="4V6M"/>
<dbReference type="PDBsum" id="6CC9"/>
<dbReference type="PDBsum" id="6CCH"/>
<dbReference type="PDBsum" id="6CCX"/>
<dbReference type="PDBsum" id="6CLZ"/>
<dbReference type="PDBsum" id="6CM1"/>
<dbReference type="PDBsum" id="6PTS"/>
<dbReference type="PDBsum" id="6PTW"/>
<dbReference type="PDBsum" id="6W4E"/>
<dbReference type="PDBsum" id="6W4F"/>
<dbReference type="PDBsum" id="7KJR"/>
<dbReference type="PDBsum" id="7RSC"/>
<dbReference type="PDBsum" id="7RSE"/>
<dbReference type="PDBsum" id="8EQS"/>
<dbReference type="BMRB" id="P02647"/>
<dbReference type="EMDB" id="EMD-22898"/>
<dbReference type="EMDB" id="EMD-28544"/>
<dbReference type="EMDB" id="EMD-29977"/>
<dbReference type="SMR" id="P02647"/>
<dbReference type="BioGRID" id="106832">
    <property type="interactions" value="212"/>
</dbReference>
<dbReference type="CORUM" id="P02647"/>
<dbReference type="DIP" id="DIP-29619N"/>
<dbReference type="FunCoup" id="P02647">
    <property type="interactions" value="146"/>
</dbReference>
<dbReference type="IntAct" id="P02647">
    <property type="interactions" value="125"/>
</dbReference>
<dbReference type="MINT" id="P02647"/>
<dbReference type="STRING" id="9606.ENSP00000236850"/>
<dbReference type="ChEMBL" id="CHEMBL5984"/>
<dbReference type="DrugBank" id="DB09130">
    <property type="generic name" value="Copper"/>
</dbReference>
<dbReference type="DrugBank" id="DB11886">
    <property type="generic name" value="Infigratinib"/>
</dbReference>
<dbReference type="DrugBank" id="DB05948">
    <property type="generic name" value="MD-0727"/>
</dbReference>
<dbReference type="DrugBank" id="DB00877">
    <property type="generic name" value="Sirolimus"/>
</dbReference>
<dbReference type="DrugBank" id="DB00460">
    <property type="generic name" value="Verteporfin"/>
</dbReference>
<dbReference type="DrugBank" id="DB01593">
    <property type="generic name" value="Zinc"/>
</dbReference>
<dbReference type="DrugBank" id="DB14487">
    <property type="generic name" value="Zinc acetate"/>
</dbReference>
<dbReference type="DrugBank" id="DB14533">
    <property type="generic name" value="Zinc chloride"/>
</dbReference>
<dbReference type="DrugBank" id="DB14548">
    <property type="generic name" value="Zinc sulfate, unspecified form"/>
</dbReference>
<dbReference type="CarbonylDB" id="P02647"/>
<dbReference type="GlyCosmos" id="P02647">
    <property type="glycosylation" value="1 site, No reported glycans"/>
</dbReference>
<dbReference type="GlyGen" id="P02647">
    <property type="glycosylation" value="5 sites, 2 O-linked glycans (3 sites)"/>
</dbReference>
<dbReference type="iPTMnet" id="P02647"/>
<dbReference type="MetOSite" id="P02647"/>
<dbReference type="PhosphoSitePlus" id="P02647"/>
<dbReference type="BioMuta" id="APOA1"/>
<dbReference type="DMDM" id="113992"/>
<dbReference type="OGP" id="P02647"/>
<dbReference type="REPRODUCTION-2DPAGE" id="IPI00021841"/>
<dbReference type="REPRODUCTION-2DPAGE" id="P02647"/>
<dbReference type="CPTAC" id="non-CPTAC-1075"/>
<dbReference type="CPTAC" id="non-CPTAC-1076"/>
<dbReference type="jPOST" id="P02647"/>
<dbReference type="MassIVE" id="P02647"/>
<dbReference type="PaxDb" id="9606-ENSP00000236850"/>
<dbReference type="PeptideAtlas" id="P02647"/>
<dbReference type="PRIDE" id="P02647"/>
<dbReference type="ProteomicsDB" id="51536"/>
<dbReference type="TopDownProteomics" id="P02647"/>
<dbReference type="ABCD" id="P02647">
    <property type="antibodies" value="16 sequenced antibodies"/>
</dbReference>
<dbReference type="Antibodypedia" id="32291">
    <property type="antibodies" value="1603 antibodies from 48 providers"/>
</dbReference>
<dbReference type="DNASU" id="335"/>
<dbReference type="Ensembl" id="ENST00000236850.5">
    <property type="protein sequence ID" value="ENSP00000236850.3"/>
    <property type="gene ID" value="ENSG00000118137.10"/>
</dbReference>
<dbReference type="Ensembl" id="ENST00000359492.6">
    <property type="protein sequence ID" value="ENSP00000352471.2"/>
    <property type="gene ID" value="ENSG00000118137.10"/>
</dbReference>
<dbReference type="Ensembl" id="ENST00000375320.5">
    <property type="protein sequence ID" value="ENSP00000364469.1"/>
    <property type="gene ID" value="ENSG00000118137.10"/>
</dbReference>
<dbReference type="Ensembl" id="ENST00000375323.5">
    <property type="protein sequence ID" value="ENSP00000364472.1"/>
    <property type="gene ID" value="ENSG00000118137.10"/>
</dbReference>
<dbReference type="GeneID" id="335"/>
<dbReference type="KEGG" id="hsa:335"/>
<dbReference type="MANE-Select" id="ENST00000236850.5">
    <property type="protein sequence ID" value="ENSP00000236850.3"/>
    <property type="RefSeq nucleotide sequence ID" value="NM_000039.3"/>
    <property type="RefSeq protein sequence ID" value="NP_000030.1"/>
</dbReference>
<dbReference type="UCSC" id="uc001ppv.2">
    <property type="organism name" value="human"/>
</dbReference>
<dbReference type="AGR" id="HGNC:600"/>
<dbReference type="CTD" id="335"/>
<dbReference type="DisGeNET" id="335"/>
<dbReference type="GeneCards" id="APOA1"/>
<dbReference type="HGNC" id="HGNC:600">
    <property type="gene designation" value="APOA1"/>
</dbReference>
<dbReference type="HPA" id="ENSG00000118137">
    <property type="expression patterns" value="Tissue enriched (liver)"/>
</dbReference>
<dbReference type="MalaCards" id="APOA1"/>
<dbReference type="MIM" id="107680">
    <property type="type" value="gene"/>
</dbReference>
<dbReference type="MIM" id="618463">
    <property type="type" value="phenotype"/>
</dbReference>
<dbReference type="MIM" id="619836">
    <property type="type" value="phenotype"/>
</dbReference>
<dbReference type="MIM" id="620058">
    <property type="type" value="phenotype"/>
</dbReference>
<dbReference type="MIM" id="620657">
    <property type="type" value="phenotype"/>
</dbReference>
<dbReference type="neXtProt" id="NX_P02647"/>
<dbReference type="OpenTargets" id="ENSG00000118137"/>
<dbReference type="Orphanet" id="93560">
    <property type="disease" value="AApoAI amyloidosis"/>
</dbReference>
<dbReference type="Orphanet" id="425">
    <property type="disease" value="Apolipoprotein A-I deficiency"/>
</dbReference>
<dbReference type="PharmGKB" id="PA49"/>
<dbReference type="VEuPathDB" id="HostDB:ENSG00000118137"/>
<dbReference type="eggNOG" id="ENOG502S1XQ">
    <property type="taxonomic scope" value="Eukaryota"/>
</dbReference>
<dbReference type="GeneTree" id="ENSGT00950000182929"/>
<dbReference type="HOGENOM" id="CLU_058447_1_0_1"/>
<dbReference type="InParanoid" id="P02647"/>
<dbReference type="OMA" id="EYVAQFE"/>
<dbReference type="OrthoDB" id="8727817at2759"/>
<dbReference type="PAN-GO" id="P02647">
    <property type="GO annotations" value="21 GO annotations based on evolutionary models"/>
</dbReference>
<dbReference type="PhylomeDB" id="P02647"/>
<dbReference type="TreeFam" id="TF334458"/>
<dbReference type="PathwayCommons" id="P02647"/>
<dbReference type="Reactome" id="R-HSA-114608">
    <property type="pathway name" value="Platelet degranulation"/>
</dbReference>
<dbReference type="Reactome" id="R-HSA-1369062">
    <property type="pathway name" value="ABC transporters in lipid homeostasis"/>
</dbReference>
<dbReference type="Reactome" id="R-HSA-1989781">
    <property type="pathway name" value="PPARA activates gene expression"/>
</dbReference>
<dbReference type="Reactome" id="R-HSA-2168880">
    <property type="pathway name" value="Scavenging of heme from plasma"/>
</dbReference>
<dbReference type="Reactome" id="R-HSA-3000471">
    <property type="pathway name" value="Scavenging by Class B Receptors"/>
</dbReference>
<dbReference type="Reactome" id="R-HSA-3000480">
    <property type="pathway name" value="Scavenging by Class A Receptors"/>
</dbReference>
<dbReference type="Reactome" id="R-HSA-381426">
    <property type="pathway name" value="Regulation of Insulin-like Growth Factor (IGF) transport and uptake by Insulin-like Growth Factor Binding Proteins (IGFBPs)"/>
</dbReference>
<dbReference type="Reactome" id="R-HSA-5682113">
    <property type="pathway name" value="Defective ABCA1 causes TGD"/>
</dbReference>
<dbReference type="Reactome" id="R-HSA-8957275">
    <property type="pathway name" value="Post-translational protein phosphorylation"/>
</dbReference>
<dbReference type="Reactome" id="R-HSA-8963888">
    <property type="pathway name" value="Chylomicron assembly"/>
</dbReference>
<dbReference type="Reactome" id="R-HSA-8963896">
    <property type="pathway name" value="HDL assembly"/>
</dbReference>
<dbReference type="Reactome" id="R-HSA-8963901">
    <property type="pathway name" value="Chylomicron remodeling"/>
</dbReference>
<dbReference type="Reactome" id="R-HSA-8964011">
    <property type="pathway name" value="HDL clearance"/>
</dbReference>
<dbReference type="Reactome" id="R-HSA-8964058">
    <property type="pathway name" value="HDL remodeling"/>
</dbReference>
<dbReference type="Reactome" id="R-HSA-9707616">
    <property type="pathway name" value="Heme signaling"/>
</dbReference>
<dbReference type="Reactome" id="R-HSA-975634">
    <property type="pathway name" value="Retinoid metabolism and transport"/>
</dbReference>
<dbReference type="Reactome" id="R-HSA-977225">
    <property type="pathway name" value="Amyloid fiber formation"/>
</dbReference>
<dbReference type="SignaLink" id="P02647"/>
<dbReference type="SIGNOR" id="P02647"/>
<dbReference type="BioGRID-ORCS" id="335">
    <property type="hits" value="12 hits in 1147 CRISPR screens"/>
</dbReference>
<dbReference type="CD-CODE" id="232F8A39">
    <property type="entry name" value="P-body"/>
</dbReference>
<dbReference type="ChiTaRS" id="APOA1">
    <property type="organism name" value="human"/>
</dbReference>
<dbReference type="EvolutionaryTrace" id="P02647"/>
<dbReference type="GeneWiki" id="Apolipoprotein_A1"/>
<dbReference type="GenomeRNAi" id="335"/>
<dbReference type="Pharos" id="P02647">
    <property type="development level" value="Tbio"/>
</dbReference>
<dbReference type="PRO" id="PR:P02647"/>
<dbReference type="Proteomes" id="UP000005640">
    <property type="component" value="Chromosome 11"/>
</dbReference>
<dbReference type="RNAct" id="P02647">
    <property type="molecule type" value="protein"/>
</dbReference>
<dbReference type="Bgee" id="ENSG00000118137">
    <property type="expression patterns" value="Expressed in jejunal mucosa and 110 other cell types or tissues"/>
</dbReference>
<dbReference type="ExpressionAtlas" id="P02647">
    <property type="expression patterns" value="baseline and differential"/>
</dbReference>
<dbReference type="GO" id="GO:0072562">
    <property type="term" value="C:blood microparticle"/>
    <property type="evidence" value="ECO:0007005"/>
    <property type="project" value="UniProtKB"/>
</dbReference>
<dbReference type="GO" id="GO:0042627">
    <property type="term" value="C:chylomicron"/>
    <property type="evidence" value="ECO:0000318"/>
    <property type="project" value="GO_Central"/>
</dbReference>
<dbReference type="GO" id="GO:0062023">
    <property type="term" value="C:collagen-containing extracellular matrix"/>
    <property type="evidence" value="ECO:0007005"/>
    <property type="project" value="BHF-UCL"/>
</dbReference>
<dbReference type="GO" id="GO:0031410">
    <property type="term" value="C:cytoplasmic vesicle"/>
    <property type="evidence" value="ECO:0000314"/>
    <property type="project" value="BHF-UCL"/>
</dbReference>
<dbReference type="GO" id="GO:0005829">
    <property type="term" value="C:cytosol"/>
    <property type="evidence" value="ECO:0000304"/>
    <property type="project" value="Reactome"/>
</dbReference>
<dbReference type="GO" id="GO:0005769">
    <property type="term" value="C:early endosome"/>
    <property type="evidence" value="ECO:0000304"/>
    <property type="project" value="Reactome"/>
</dbReference>
<dbReference type="GO" id="GO:0030139">
    <property type="term" value="C:endocytic vesicle"/>
    <property type="evidence" value="ECO:0000314"/>
    <property type="project" value="BHF-UCL"/>
</dbReference>
<dbReference type="GO" id="GO:0071682">
    <property type="term" value="C:endocytic vesicle lumen"/>
    <property type="evidence" value="ECO:0000304"/>
    <property type="project" value="Reactome"/>
</dbReference>
<dbReference type="GO" id="GO:0005788">
    <property type="term" value="C:endoplasmic reticulum lumen"/>
    <property type="evidence" value="ECO:0000304"/>
    <property type="project" value="Reactome"/>
</dbReference>
<dbReference type="GO" id="GO:0070062">
    <property type="term" value="C:extracellular exosome"/>
    <property type="evidence" value="ECO:0007005"/>
    <property type="project" value="UniProtKB"/>
</dbReference>
<dbReference type="GO" id="GO:0005576">
    <property type="term" value="C:extracellular region"/>
    <property type="evidence" value="ECO:0007005"/>
    <property type="project" value="BHF-UCL"/>
</dbReference>
<dbReference type="GO" id="GO:0005615">
    <property type="term" value="C:extracellular space"/>
    <property type="evidence" value="ECO:0000314"/>
    <property type="project" value="MGI"/>
</dbReference>
<dbReference type="GO" id="GO:1903561">
    <property type="term" value="C:extracellular vesicle"/>
    <property type="evidence" value="ECO:0007005"/>
    <property type="project" value="UniProtKB"/>
</dbReference>
<dbReference type="GO" id="GO:0034364">
    <property type="term" value="C:high-density lipoprotein particle"/>
    <property type="evidence" value="ECO:0000314"/>
    <property type="project" value="BHF-UCL"/>
</dbReference>
<dbReference type="GO" id="GO:0034362">
    <property type="term" value="C:low-density lipoprotein particle"/>
    <property type="evidence" value="ECO:0000318"/>
    <property type="project" value="GO_Central"/>
</dbReference>
<dbReference type="GO" id="GO:0005886">
    <property type="term" value="C:plasma membrane"/>
    <property type="evidence" value="ECO:0000304"/>
    <property type="project" value="Reactome"/>
</dbReference>
<dbReference type="GO" id="GO:0034774">
    <property type="term" value="C:secretory granule lumen"/>
    <property type="evidence" value="ECO:0000304"/>
    <property type="project" value="Reactome"/>
</dbReference>
<dbReference type="GO" id="GO:0034366">
    <property type="term" value="C:spherical high-density lipoprotein particle"/>
    <property type="evidence" value="ECO:0000314"/>
    <property type="project" value="BHF-UCL"/>
</dbReference>
<dbReference type="GO" id="GO:0034361">
    <property type="term" value="C:very-low-density lipoprotein particle"/>
    <property type="evidence" value="ECO:0000314"/>
    <property type="project" value="BHF-UCL"/>
</dbReference>
<dbReference type="GO" id="GO:0001540">
    <property type="term" value="F:amyloid-beta binding"/>
    <property type="evidence" value="ECO:0000314"/>
    <property type="project" value="BHF-UCL"/>
</dbReference>
<dbReference type="GO" id="GO:0034191">
    <property type="term" value="F:apolipoprotein A-I receptor binding"/>
    <property type="evidence" value="ECO:0000353"/>
    <property type="project" value="BHF-UCL"/>
</dbReference>
<dbReference type="GO" id="GO:0034190">
    <property type="term" value="F:apolipoprotein receptor binding"/>
    <property type="evidence" value="ECO:0000353"/>
    <property type="project" value="BHF-UCL"/>
</dbReference>
<dbReference type="GO" id="GO:0045499">
    <property type="term" value="F:chemorepellent activity"/>
    <property type="evidence" value="ECO:0000314"/>
    <property type="project" value="UniProtKB"/>
</dbReference>
<dbReference type="GO" id="GO:0015485">
    <property type="term" value="F:cholesterol binding"/>
    <property type="evidence" value="ECO:0000314"/>
    <property type="project" value="BHF-UCL"/>
</dbReference>
<dbReference type="GO" id="GO:0120020">
    <property type="term" value="F:cholesterol transfer activity"/>
    <property type="evidence" value="ECO:0000315"/>
    <property type="project" value="BHF-UCL"/>
</dbReference>
<dbReference type="GO" id="GO:0019899">
    <property type="term" value="F:enzyme binding"/>
    <property type="evidence" value="ECO:0000353"/>
    <property type="project" value="BHF-UCL"/>
</dbReference>
<dbReference type="GO" id="GO:0031072">
    <property type="term" value="F:heat shock protein binding"/>
    <property type="evidence" value="ECO:0000353"/>
    <property type="project" value="CAFA"/>
</dbReference>
<dbReference type="GO" id="GO:0008035">
    <property type="term" value="F:high-density lipoprotein particle binding"/>
    <property type="evidence" value="ECO:0007669"/>
    <property type="project" value="Ensembl"/>
</dbReference>
<dbReference type="GO" id="GO:0070653">
    <property type="term" value="F:high-density lipoprotein particle receptor binding"/>
    <property type="evidence" value="ECO:0000353"/>
    <property type="project" value="BHF-UCL"/>
</dbReference>
<dbReference type="GO" id="GO:0042802">
    <property type="term" value="F:identical protein binding"/>
    <property type="evidence" value="ECO:0000353"/>
    <property type="project" value="IntAct"/>
</dbReference>
<dbReference type="GO" id="GO:0060228">
    <property type="term" value="F:phosphatidylcholine-sterol O-acyltransferase activator activity"/>
    <property type="evidence" value="ECO:0000314"/>
    <property type="project" value="BHF-UCL"/>
</dbReference>
<dbReference type="GO" id="GO:0005543">
    <property type="term" value="F:phospholipid binding"/>
    <property type="evidence" value="ECO:0000314"/>
    <property type="project" value="BHF-UCL"/>
</dbReference>
<dbReference type="GO" id="GO:0042803">
    <property type="term" value="F:protein homodimerization activity"/>
    <property type="evidence" value="ECO:0000250"/>
    <property type="project" value="UniProtKB"/>
</dbReference>
<dbReference type="GO" id="GO:0048018">
    <property type="term" value="F:receptor ligand activity"/>
    <property type="evidence" value="ECO:0000314"/>
    <property type="project" value="UniProt"/>
</dbReference>
<dbReference type="GO" id="GO:0005102">
    <property type="term" value="F:signaling receptor binding"/>
    <property type="evidence" value="ECO:0000353"/>
    <property type="project" value="ARUK-UCL"/>
</dbReference>
<dbReference type="GO" id="GO:0055090">
    <property type="term" value="P:acylglycerol homeostasis"/>
    <property type="evidence" value="ECO:0000318"/>
    <property type="project" value="GO_Central"/>
</dbReference>
<dbReference type="GO" id="GO:0030325">
    <property type="term" value="P:adrenal gland development"/>
    <property type="evidence" value="ECO:0007669"/>
    <property type="project" value="Ensembl"/>
</dbReference>
<dbReference type="GO" id="GO:0034205">
    <property type="term" value="P:amyloid-beta formation"/>
    <property type="evidence" value="ECO:0000314"/>
    <property type="project" value="DisProt"/>
</dbReference>
<dbReference type="GO" id="GO:0043534">
    <property type="term" value="P:blood vessel endothelial cell migration"/>
    <property type="evidence" value="ECO:0007669"/>
    <property type="project" value="Ensembl"/>
</dbReference>
<dbReference type="GO" id="GO:0071402">
    <property type="term" value="P:cellular response to lipoprotein particle stimulus"/>
    <property type="evidence" value="ECO:0000314"/>
    <property type="project" value="UniProt"/>
</dbReference>
<dbReference type="GO" id="GO:0006695">
    <property type="term" value="P:cholesterol biosynthetic process"/>
    <property type="evidence" value="ECO:0007669"/>
    <property type="project" value="Ensembl"/>
</dbReference>
<dbReference type="GO" id="GO:0033344">
    <property type="term" value="P:cholesterol efflux"/>
    <property type="evidence" value="ECO:0000314"/>
    <property type="project" value="BHF-UCL"/>
</dbReference>
<dbReference type="GO" id="GO:0042632">
    <property type="term" value="P:cholesterol homeostasis"/>
    <property type="evidence" value="ECO:0000314"/>
    <property type="project" value="BHF-UCL"/>
</dbReference>
<dbReference type="GO" id="GO:0070508">
    <property type="term" value="P:cholesterol import"/>
    <property type="evidence" value="ECO:0000315"/>
    <property type="project" value="BHF-UCL"/>
</dbReference>
<dbReference type="GO" id="GO:0008203">
    <property type="term" value="P:cholesterol metabolic process"/>
    <property type="evidence" value="ECO:0000315"/>
    <property type="project" value="BHF-UCL"/>
</dbReference>
<dbReference type="GO" id="GO:0030301">
    <property type="term" value="P:cholesterol transport"/>
    <property type="evidence" value="ECO:0000314"/>
    <property type="project" value="MGI"/>
</dbReference>
<dbReference type="GO" id="GO:0001935">
    <property type="term" value="P:endothelial cell proliferation"/>
    <property type="evidence" value="ECO:0007669"/>
    <property type="project" value="Ensembl"/>
</dbReference>
<dbReference type="GO" id="GO:0007186">
    <property type="term" value="P:G protein-coupled receptor signaling pathway"/>
    <property type="evidence" value="ECO:0000314"/>
    <property type="project" value="BHF-UCL"/>
</dbReference>
<dbReference type="GO" id="GO:0008211">
    <property type="term" value="P:glucocorticoid metabolic process"/>
    <property type="evidence" value="ECO:0007669"/>
    <property type="project" value="Ensembl"/>
</dbReference>
<dbReference type="GO" id="GO:0034380">
    <property type="term" value="P:high-density lipoprotein particle assembly"/>
    <property type="evidence" value="ECO:0000314"/>
    <property type="project" value="BHF-UCL"/>
</dbReference>
<dbReference type="GO" id="GO:0034384">
    <property type="term" value="P:high-density lipoprotein particle clearance"/>
    <property type="evidence" value="ECO:0000305"/>
    <property type="project" value="BHF-UCL"/>
</dbReference>
<dbReference type="GO" id="GO:0034375">
    <property type="term" value="P:high-density lipoprotein particle remodeling"/>
    <property type="evidence" value="ECO:0000314"/>
    <property type="project" value="BHF-UCL"/>
</dbReference>
<dbReference type="GO" id="GO:0007229">
    <property type="term" value="P:integrin-mediated signaling pathway"/>
    <property type="evidence" value="ECO:0000314"/>
    <property type="project" value="UniProtKB"/>
</dbReference>
<dbReference type="GO" id="GO:0019915">
    <property type="term" value="P:lipid storage"/>
    <property type="evidence" value="ECO:0007669"/>
    <property type="project" value="Ensembl"/>
</dbReference>
<dbReference type="GO" id="GO:0042158">
    <property type="term" value="P:lipoprotein biosynthetic process"/>
    <property type="evidence" value="ECO:0007669"/>
    <property type="project" value="Ensembl"/>
</dbReference>
<dbReference type="GO" id="GO:0050919">
    <property type="term" value="P:negative chemotaxis"/>
    <property type="evidence" value="ECO:0000314"/>
    <property type="project" value="UniProtKB"/>
</dbReference>
<dbReference type="GO" id="GO:0060354">
    <property type="term" value="P:negative regulation of cell adhesion molecule production"/>
    <property type="evidence" value="ECO:0000314"/>
    <property type="project" value="BHF-UCL"/>
</dbReference>
<dbReference type="GO" id="GO:0002719">
    <property type="term" value="P:negative regulation of cytokine production involved in immune response"/>
    <property type="evidence" value="ECO:0000314"/>
    <property type="project" value="BHF-UCL"/>
</dbReference>
<dbReference type="GO" id="GO:0034115">
    <property type="term" value="P:negative regulation of heterotypic cell-cell adhesion"/>
    <property type="evidence" value="ECO:0000314"/>
    <property type="project" value="BHF-UCL"/>
</dbReference>
<dbReference type="GO" id="GO:0050728">
    <property type="term" value="P:negative regulation of inflammatory response"/>
    <property type="evidence" value="ECO:0000314"/>
    <property type="project" value="BHF-UCL"/>
</dbReference>
<dbReference type="GO" id="GO:0032691">
    <property type="term" value="P:negative regulation of interleukin-1 beta production"/>
    <property type="evidence" value="ECO:0000314"/>
    <property type="project" value="BHF-UCL"/>
</dbReference>
<dbReference type="GO" id="GO:0060761">
    <property type="term" value="P:negative regulation of response to cytokine stimulus"/>
    <property type="evidence" value="ECO:0000314"/>
    <property type="project" value="BHF-UCL"/>
</dbReference>
<dbReference type="GO" id="GO:0010804">
    <property type="term" value="P:negative regulation of tumor necrosis factor-mediated signaling pathway"/>
    <property type="evidence" value="ECO:0000314"/>
    <property type="project" value="BHF-UCL"/>
</dbReference>
<dbReference type="GO" id="GO:0010903">
    <property type="term" value="P:negative regulation of very-low-density lipoprotein particle remodeling"/>
    <property type="evidence" value="ECO:0000314"/>
    <property type="project" value="BHF-UCL"/>
</dbReference>
<dbReference type="GO" id="GO:0018206">
    <property type="term" value="P:peptidyl-methionine modification"/>
    <property type="evidence" value="ECO:0000314"/>
    <property type="project" value="UniProtKB"/>
</dbReference>
<dbReference type="GO" id="GO:0006656">
    <property type="term" value="P:phosphatidylcholine biosynthetic process"/>
    <property type="evidence" value="ECO:0000314"/>
    <property type="project" value="BHF-UCL"/>
</dbReference>
<dbReference type="GO" id="GO:0033700">
    <property type="term" value="P:phospholipid efflux"/>
    <property type="evidence" value="ECO:0000314"/>
    <property type="project" value="BHF-UCL"/>
</dbReference>
<dbReference type="GO" id="GO:0055091">
    <property type="term" value="P:phospholipid homeostasis"/>
    <property type="evidence" value="ECO:0000314"/>
    <property type="project" value="BHF-UCL"/>
</dbReference>
<dbReference type="GO" id="GO:0010875">
    <property type="term" value="P:positive regulation of cholesterol efflux"/>
    <property type="evidence" value="ECO:0000314"/>
    <property type="project" value="UniProtKB"/>
</dbReference>
<dbReference type="GO" id="GO:0090205">
    <property type="term" value="P:positive regulation of cholesterol metabolic process"/>
    <property type="evidence" value="ECO:0000314"/>
    <property type="project" value="BHF-UCL"/>
</dbReference>
<dbReference type="GO" id="GO:0050766">
    <property type="term" value="P:positive regulation of phagocytosis"/>
    <property type="evidence" value="ECO:0000314"/>
    <property type="project" value="UniProtKB"/>
</dbReference>
<dbReference type="GO" id="GO:1902995">
    <property type="term" value="P:positive regulation of phospholipid efflux"/>
    <property type="evidence" value="ECO:0000314"/>
    <property type="project" value="UniProtKB"/>
</dbReference>
<dbReference type="GO" id="GO:0035025">
    <property type="term" value="P:positive regulation of Rho protein signal transduction"/>
    <property type="evidence" value="ECO:0000314"/>
    <property type="project" value="UniProtKB"/>
</dbReference>
<dbReference type="GO" id="GO:0051496">
    <property type="term" value="P:positive regulation of stress fiber assembly"/>
    <property type="evidence" value="ECO:0000314"/>
    <property type="project" value="UniProtKB"/>
</dbReference>
<dbReference type="GO" id="GO:1900026">
    <property type="term" value="P:positive regulation of substrate adhesion-dependent cell spreading"/>
    <property type="evidence" value="ECO:0000314"/>
    <property type="project" value="UniProtKB"/>
</dbReference>
<dbReference type="GO" id="GO:0018158">
    <property type="term" value="P:protein oxidation"/>
    <property type="evidence" value="ECO:0000314"/>
    <property type="project" value="UniProtKB"/>
</dbReference>
<dbReference type="GO" id="GO:0050821">
    <property type="term" value="P:protein stabilization"/>
    <property type="evidence" value="ECO:0000314"/>
    <property type="project" value="UniProtKB"/>
</dbReference>
<dbReference type="GO" id="GO:0032489">
    <property type="term" value="P:regulation of Cdc42 protein signal transduction"/>
    <property type="evidence" value="ECO:0000314"/>
    <property type="project" value="BHF-UCL"/>
</dbReference>
<dbReference type="GO" id="GO:0030300">
    <property type="term" value="P:regulation of intestinal cholesterol absorption"/>
    <property type="evidence" value="ECO:0007669"/>
    <property type="project" value="Ensembl"/>
</dbReference>
<dbReference type="GO" id="GO:0043691">
    <property type="term" value="P:reverse cholesterol transport"/>
    <property type="evidence" value="ECO:0000315"/>
    <property type="project" value="BHF-UCL"/>
</dbReference>
<dbReference type="GO" id="GO:0070328">
    <property type="term" value="P:triglyceride homeostasis"/>
    <property type="evidence" value="ECO:0000314"/>
    <property type="project" value="BHF-UCL"/>
</dbReference>
<dbReference type="GO" id="GO:0051180">
    <property type="term" value="P:vitamin transport"/>
    <property type="evidence" value="ECO:0000315"/>
    <property type="project" value="AgBase"/>
</dbReference>
<dbReference type="FunFam" id="1.20.120.20:FF:000001">
    <property type="entry name" value="Apolipoprotein A-I"/>
    <property type="match status" value="1"/>
</dbReference>
<dbReference type="FunFam" id="1.20.5.20:FF:000001">
    <property type="entry name" value="apolipoprotein A-I"/>
    <property type="match status" value="1"/>
</dbReference>
<dbReference type="Gene3D" id="1.20.5.20">
    <property type="match status" value="1"/>
</dbReference>
<dbReference type="Gene3D" id="6.10.140.380">
    <property type="match status" value="1"/>
</dbReference>
<dbReference type="Gene3D" id="1.20.120.20">
    <property type="entry name" value="Apolipoprotein"/>
    <property type="match status" value="1"/>
</dbReference>
<dbReference type="InterPro" id="IPR000074">
    <property type="entry name" value="ApoA_E"/>
</dbReference>
<dbReference type="InterPro" id="IPR050163">
    <property type="entry name" value="Apolipoprotein_A1/A4/E"/>
</dbReference>
<dbReference type="PANTHER" id="PTHR18976">
    <property type="entry name" value="APOLIPOPROTEIN"/>
    <property type="match status" value="1"/>
</dbReference>
<dbReference type="PANTHER" id="PTHR18976:SF11">
    <property type="entry name" value="APOLIPOPROTEIN A-I"/>
    <property type="match status" value="1"/>
</dbReference>
<dbReference type="Pfam" id="PF01442">
    <property type="entry name" value="Apolipoprotein"/>
    <property type="match status" value="1"/>
</dbReference>
<dbReference type="SUPFAM" id="SSF58113">
    <property type="entry name" value="Apolipoprotein A-I"/>
    <property type="match status" value="1"/>
</dbReference>
<keyword id="KW-0002">3D-structure</keyword>
<keyword id="KW-0034">Amyloid</keyword>
<keyword id="KW-1008">Amyloidosis</keyword>
<keyword id="KW-0065">Atherosclerosis</keyword>
<keyword id="KW-0153">Cholesterol metabolism</keyword>
<keyword id="KW-0903">Direct protein sequencing</keyword>
<keyword id="KW-0225">Disease variant</keyword>
<keyword id="KW-0971">Glycation</keyword>
<keyword id="KW-0325">Glycoprotein</keyword>
<keyword id="KW-0345">HDL</keyword>
<keyword id="KW-0443">Lipid metabolism</keyword>
<keyword id="KW-0445">Lipid transport</keyword>
<keyword id="KW-0449">Lipoprotein</keyword>
<keyword id="KW-0622">Neuropathy</keyword>
<keyword id="KW-0558">Oxidation</keyword>
<keyword id="KW-0564">Palmitate</keyword>
<keyword id="KW-0597">Phosphoprotein</keyword>
<keyword id="KW-1267">Proteomics identification</keyword>
<keyword id="KW-1185">Reference proteome</keyword>
<keyword id="KW-0677">Repeat</keyword>
<keyword id="KW-0964">Secreted</keyword>
<keyword id="KW-0732">Signal</keyword>
<keyword id="KW-0753">Steroid metabolism</keyword>
<keyword id="KW-1207">Sterol metabolism</keyword>
<keyword id="KW-0813">Transport</keyword>
<feature type="signal peptide" evidence="28 30">
    <location>
        <begin position="1"/>
        <end position="18"/>
    </location>
</feature>
<feature type="chain" id="PRO_0000425323" description="Proapolipoprotein A-I">
    <location>
        <begin position="19"/>
        <end position="267"/>
    </location>
</feature>
<feature type="chain" id="PRO_0000001939" description="Apolipoprotein A-I">
    <location>
        <begin position="25"/>
        <end position="267"/>
    </location>
</feature>
<feature type="chain" id="PRO_0000001940" description="Truncated apolipoprotein A-I">
    <location>
        <begin position="25"/>
        <end position="266"/>
    </location>
</feature>
<feature type="repeat" description="1">
    <location>
        <begin position="68"/>
        <end position="89"/>
    </location>
</feature>
<feature type="repeat" description="2">
    <location>
        <begin position="90"/>
        <end position="111"/>
    </location>
</feature>
<feature type="repeat" description="3; half-length">
    <location>
        <begin position="112"/>
        <end position="122"/>
    </location>
</feature>
<feature type="repeat" description="4">
    <location>
        <begin position="123"/>
        <end position="144"/>
    </location>
</feature>
<feature type="repeat" description="5">
    <location>
        <begin position="145"/>
        <end position="166"/>
    </location>
</feature>
<feature type="repeat" description="6">
    <location>
        <begin position="167"/>
        <end position="188"/>
    </location>
</feature>
<feature type="repeat" description="7">
    <location>
        <begin position="189"/>
        <end position="210"/>
    </location>
</feature>
<feature type="repeat" description="8">
    <location>
        <begin position="211"/>
        <end position="232"/>
    </location>
</feature>
<feature type="repeat" description="9; half-length">
    <location>
        <begin position="233"/>
        <end position="243"/>
    </location>
</feature>
<feature type="repeat" description="10">
    <location>
        <begin position="244"/>
        <end position="267"/>
    </location>
</feature>
<feature type="region of interest" description="10 X approximate tandem repeats">
    <location>
        <begin position="68"/>
        <end position="267"/>
    </location>
</feature>
<feature type="modified residue" description="Methionine sulfoxide" evidence="7">
    <location>
        <position position="110"/>
    </location>
</feature>
<feature type="modified residue" description="Methionine sulfoxide" evidence="7">
    <location>
        <position position="136"/>
    </location>
</feature>
<feature type="glycosylation site" description="N-linked (Glc) (glycation) lysine" evidence="37">
    <location>
        <position position="263"/>
    </location>
</feature>
<feature type="sequence variant" id="VAR_083307" description="In FHA2; no protein expression." evidence="38">
    <location>
        <begin position="23"/>
        <end position="267"/>
    </location>
</feature>
<feature type="sequence variant" id="VAR_000605" description="In Munster-3C; dbSNP:rs121912720.">
    <original>P</original>
    <variation>H</variation>
    <location>
        <position position="27"/>
    </location>
</feature>
<feature type="sequence variant" id="VAR_000606" description="In dbSNP:rs121912720." evidence="24">
    <original>P</original>
    <variation>R</variation>
    <location>
        <position position="27"/>
    </location>
</feature>
<feature type="sequence variant" id="VAR_000607" description="In Munster-3B; dbSNP:rs121912721." evidence="24">
    <original>P</original>
    <variation>R</variation>
    <location>
        <position position="28"/>
    </location>
</feature>
<feature type="sequence variant" id="VAR_000608" description="In Baltimore; dbSNP:rs28929476." evidence="18">
    <original>R</original>
    <variation>L</variation>
    <location>
        <position position="34"/>
    </location>
</feature>
<feature type="sequence variant" id="VAR_000609" description="In AMYLD3; dbSNP:rs28931574." evidence="6 20 27 35">
    <original>G</original>
    <variation>R</variation>
    <location>
        <position position="50"/>
    </location>
</feature>
<feature type="sequence variant" id="VAR_083308" description="In HDL deficiency; with periorbital xanthelasmas; decreased protein abundance." evidence="34">
    <location>
        <begin position="56"/>
        <end position="267"/>
    </location>
</feature>
<feature type="sequence variant" id="VAR_025445" description="In dbSNP:rs12718465." evidence="11 15">
    <original>A</original>
    <variation>T</variation>
    <location>
        <position position="61"/>
    </location>
</feature>
<feature type="sequence variant" id="VAR_000610" description="In AMYLD3; dbSNP:rs121912724." evidence="10">
    <original>L</original>
    <variation>R</variation>
    <location>
        <position position="84"/>
    </location>
</feature>
<feature type="sequence variant" id="VAR_017017" description="Confirmed at protein level; dbSNP:rs766422306." evidence="9 21">
    <original>T</original>
    <variation>I</variation>
    <location>
        <position position="92"/>
    </location>
</feature>
<feature type="sequence variant" id="VAR_083309" description="In FHA2; missing protein expression." evidence="15">
    <location>
        <begin position="108"/>
        <end position="267"/>
    </location>
</feature>
<feature type="sequence variant" id="VAR_000611" description="In dbSNP:rs150243849." evidence="19">
    <original>D</original>
    <variation>E</variation>
    <location>
        <position position="113"/>
    </location>
</feature>
<feature type="sequence variant" id="VAR_000612" description="In Hita.">
    <original>A</original>
    <variation>D</variation>
    <location>
        <position position="119"/>
    </location>
</feature>
<feature type="sequence variant" id="VAR_016189" description="In dbSNP:rs5077.">
    <original>D</original>
    <variation>H</variation>
    <location>
        <position position="126"/>
    </location>
</feature>
<feature type="sequence variant" id="VAR_000613" description="In Munster-3A; dbSNP:rs921646982.">
    <original>D</original>
    <variation>N</variation>
    <location>
        <position position="127"/>
    </location>
</feature>
<feature type="sequence variant" id="VAR_000615" description="In dbSNP:rs4882." evidence="19">
    <original>K</original>
    <variation>M</variation>
    <location>
        <position position="131"/>
    </location>
</feature>
<feature type="sequence variant" id="VAR_000614" description="In Marburg/Munster-2.">
    <location>
        <position position="131"/>
    </location>
</feature>
<feature type="sequence variant" id="VAR_000616" description="In Tsushima.">
    <original>W</original>
    <variation>R</variation>
    <location>
        <position position="132"/>
    </location>
</feature>
<feature type="sequence variant" id="VAR_000617" description="In Fukuoka." evidence="17">
    <original>E</original>
    <variation>K</variation>
    <location>
        <position position="134"/>
    </location>
</feature>
<feature type="sequence variant" id="VAR_000618" description="In Norway; dbSNP:rs121912718." evidence="31">
    <original>E</original>
    <variation>K</variation>
    <location>
        <position position="160"/>
    </location>
</feature>
<feature type="sequence variant" id="VAR_000619" description="In dbSNP:rs758509542." evidence="19">
    <original>E</original>
    <variation>G</variation>
    <location>
        <position position="163"/>
    </location>
</feature>
<feature type="sequence variant" id="VAR_000620" description="In Giessen; dbSNP:rs121912719." evidence="32">
    <original>P</original>
    <variation>R</variation>
    <location>
        <position position="167"/>
    </location>
</feature>
<feature type="sequence variant" id="VAR_000621" description="In Zaragoza." evidence="40">
    <original>L</original>
    <variation>R</variation>
    <location>
        <position position="168"/>
    </location>
</feature>
<feature type="sequence variant" id="VAR_000622" description="In dbSNP:rs1015066427." evidence="19">
    <original>E</original>
    <variation>V</variation>
    <location>
        <position position="171"/>
    </location>
</feature>
<feature type="sequence variant" id="VAR_083310" description="In AMYLD3; uncertain significance." evidence="3">
    <original>R</original>
    <variation>P</variation>
    <location>
        <position position="173"/>
    </location>
</feature>
<feature type="sequence variant" id="VAR_074073" description="In Boston; correlated with decreased levels of HDL cholesterol; correlated with decreased serum cellular cholesterol efflux; correlated with decreased lecithin-cholesterol acyltransferase (LCAT) activity." evidence="25">
    <original>R</original>
    <variation>S</variation>
    <location>
        <position position="173"/>
    </location>
</feature>
<feature type="sequence variant" id="VAR_021362" description="In Oita; 60% of normal apoA-I and normal HDL cholesterol levels; rapidly cleared from plasma; dbSNP:rs121912727." evidence="39">
    <original>V</original>
    <variation>E</variation>
    <location>
        <position position="180"/>
    </location>
</feature>
<feature type="sequence variant" id="VAR_014609" description="In dbSNP:rs5078.">
    <original>R</original>
    <variation>P</variation>
    <location>
        <position position="184"/>
    </location>
</feature>
<feature type="sequence variant" id="VAR_000623" description="In dbSNP:rs121912722." evidence="24">
    <original>P</original>
    <variation>R</variation>
    <location>
        <position position="189"/>
    </location>
</feature>
<feature type="sequence variant" id="VAR_000624" description="In Milano; correlated with decreased HDL levels and moderate increase in triglycerides; allows the formation of disulfide-linked homodimers via the introduced cysteine; assembles properly in HDL; alters protein structure; has no tendency to form fibrils and aggregates; dbSNP:rs28931573." evidence="23 29">
    <original>R</original>
    <variation>C</variation>
    <location>
        <position position="197"/>
    </location>
</feature>
<feature type="sequence variant" id="VAR_083311" description="In AMYLD3; plasma level of HDL and apoA-I protein were significantly lower in the patient." evidence="4">
    <original>L</original>
    <variation>S</variation>
    <location>
        <position position="198"/>
    </location>
</feature>
<feature type="sequence variant" id="VAR_083312" description="In AMYLD3; uncertain significance." evidence="6">
    <original>A</original>
    <variation>P</variation>
    <location>
        <position position="199"/>
    </location>
</feature>
<feature type="sequence variant" id="VAR_000625" description="In Munster-4; dbSNP:rs121912717." evidence="19">
    <original>E</original>
    <variation>K</variation>
    <location>
        <position position="222"/>
    </location>
</feature>
<feature type="sequence conflict" description="In Ref. 25; AA sequence." evidence="41" ref="25">
    <original>W</original>
    <variation>P</variation>
    <location>
        <position position="32"/>
    </location>
</feature>
<feature type="helix" evidence="44">
    <location>
        <begin position="33"/>
        <end position="42"/>
    </location>
</feature>
<feature type="helix" evidence="44">
    <location>
        <begin position="45"/>
        <end position="59"/>
    </location>
</feature>
<feature type="helix" evidence="44">
    <location>
        <begin position="61"/>
        <end position="65"/>
    </location>
</feature>
<feature type="helix" evidence="46">
    <location>
        <begin position="82"/>
        <end position="110"/>
    </location>
</feature>
<feature type="helix" evidence="45">
    <location>
        <begin position="113"/>
        <end position="119"/>
    </location>
</feature>
<feature type="turn" evidence="44">
    <location>
        <begin position="159"/>
        <end position="164"/>
    </location>
</feature>
<feature type="helix" evidence="44">
    <location>
        <begin position="166"/>
        <end position="203"/>
    </location>
</feature>
<feature type="turn" evidence="43">
    <location>
        <begin position="229"/>
        <end position="232"/>
    </location>
</feature>
<feature type="helix" evidence="43">
    <location>
        <begin position="233"/>
        <end position="260"/>
    </location>
</feature>
<accession>P02647</accession>
<accession>A8K866</accession>
<accession>Q6LDN9</accession>
<accession>Q6Q785</accession>
<accession>Q9UCS8</accession>
<accession>Q9UCT8</accession>
<organism>
    <name type="scientific">Homo sapiens</name>
    <name type="common">Human</name>
    <dbReference type="NCBI Taxonomy" id="9606"/>
    <lineage>
        <taxon>Eukaryota</taxon>
        <taxon>Metazoa</taxon>
        <taxon>Chordata</taxon>
        <taxon>Craniata</taxon>
        <taxon>Vertebrata</taxon>
        <taxon>Euteleostomi</taxon>
        <taxon>Mammalia</taxon>
        <taxon>Eutheria</taxon>
        <taxon>Euarchontoglires</taxon>
        <taxon>Primates</taxon>
        <taxon>Haplorrhini</taxon>
        <taxon>Catarrhini</taxon>
        <taxon>Hominidae</taxon>
        <taxon>Homo</taxon>
    </lineage>
</organism>
<comment type="function">
    <text evidence="16">Participates in the reverse transport of cholesterol from tissues to the liver for excretion by promoting cholesterol efflux from tissues and by acting as a cofactor for the lecithin cholesterol acyltransferase (LCAT). As part of the SPAP complex, activates spermatozoa motility.</text>
</comment>
<comment type="subunit">
    <text evidence="2 5 8 12 13 16 22">Homodimer (By similarity). Interacts with NAXE and CLU (PubMed:11991719, PubMed:1742316). Component of a sperm activating protein complex (SPAP), consisting of APOA1, an immunoglobulin heavy chain, an immunoglobulin light chain and albumin (PubMed:1909888). Interacts with NDRG1 (PubMed:15922294). Interacts with SCGB3A2 (PubMed:12847263). Interacts with NAXE and YJEFN3 (PubMed:23719382).</text>
</comment>
<comment type="interaction">
    <interactant intactId="EBI-701692">
        <id>P02647</id>
    </interactant>
    <interactant intactId="EBI-784112">
        <id>O95477</id>
        <label>ABCA1</label>
    </interactant>
    <organismsDiffer>false</organismsDiffer>
    <experiments>8</experiments>
</comment>
<comment type="interaction">
    <interactant intactId="EBI-701692">
        <id>P02647</id>
    </interactant>
    <interactant intactId="EBI-701692">
        <id>P02647</id>
        <label>APOA1</label>
    </interactant>
    <organismsDiffer>false</organismsDiffer>
    <experiments>28</experiments>
</comment>
<comment type="interaction">
    <interactant intactId="EBI-701692">
        <id>P02647</id>
    </interactant>
    <interactant intactId="EBI-77613">
        <id>P05067</id>
        <label>APP</label>
    </interactant>
    <organismsDiffer>false</organismsDiffer>
    <experiments>8</experiments>
</comment>
<comment type="interaction">
    <interactant intactId="EBI-701692">
        <id>P02647</id>
    </interactant>
    <interactant intactId="EBI-347528">
        <id>Q07021</id>
        <label>C1QBP</label>
    </interactant>
    <organismsDiffer>false</organismsDiffer>
    <experiments>2</experiments>
</comment>
<comment type="interaction">
    <interactant intactId="EBI-701692">
        <id>P02647</id>
    </interactant>
    <interactant intactId="EBI-2548702">
        <id>Q96DZ9</id>
        <label>CMTM5</label>
    </interactant>
    <organismsDiffer>false</organismsDiffer>
    <experiments>3</experiments>
</comment>
<comment type="interaction">
    <interactant intactId="EBI-701692">
        <id>P02647</id>
    </interactant>
    <interactant intactId="EBI-11522780">
        <id>Q96DZ9-2</id>
        <label>CMTM5</label>
    </interactant>
    <organismsDiffer>false</organismsDiffer>
    <experiments>6</experiments>
</comment>
<comment type="interaction">
    <interactant intactId="EBI-701692">
        <id>P02647</id>
    </interactant>
    <interactant intactId="EBI-1220767">
        <id>P00738</id>
        <label>HP</label>
    </interactant>
    <organismsDiffer>false</organismsDiffer>
    <experiments>3</experiments>
</comment>
<comment type="interaction">
    <interactant intactId="EBI-701692">
        <id>P02647</id>
    </interactant>
    <interactant intactId="EBI-21591415">
        <id>P13473-2</id>
        <label>LAMP2</label>
    </interactant>
    <organismsDiffer>false</organismsDiffer>
    <experiments>3</experiments>
</comment>
<comment type="interaction">
    <interactant intactId="EBI-701692">
        <id>P02647</id>
    </interactant>
    <interactant intactId="EBI-9104464">
        <id>P04180</id>
        <label>LCAT</label>
    </interactant>
    <organismsDiffer>false</organismsDiffer>
    <experiments>2</experiments>
</comment>
<comment type="interaction">
    <interactant intactId="EBI-701692">
        <id>P02647</id>
    </interactant>
    <interactant intactId="EBI-1384105">
        <id>Q16659</id>
        <label>MAPK6</label>
    </interactant>
    <organismsDiffer>false</organismsDiffer>
    <experiments>3</experiments>
</comment>
<comment type="interaction">
    <interactant intactId="EBI-701692">
        <id>P02647</id>
    </interactant>
    <interactant intactId="EBI-2623095">
        <id>Q9Y371</id>
        <label>SH3GLB1</label>
    </interactant>
    <organismsDiffer>false</organismsDiffer>
    <experiments>3</experiments>
</comment>
<comment type="interaction">
    <interactant intactId="EBI-701692">
        <id>P02647</id>
    </interactant>
    <interactant intactId="EBI-985879">
        <id>P37840</id>
        <label>SNCA</label>
    </interactant>
    <organismsDiffer>false</organismsDiffer>
    <experiments>3</experiments>
</comment>
<comment type="subcellular location">
    <subcellularLocation>
        <location>Secreted</location>
    </subcellularLocation>
</comment>
<comment type="tissue specificity">
    <text evidence="7">Major protein of plasma HDL, also found in chylomicrons. Synthesized in the liver and small intestine. The oxidized form at Met-110 and Met-136 is increased in individuals with increased risk for coronary artery disease, such as in carrier of the eNOSa/b genotype and exposure to cigarette smoking. It is also present in increased levels in aortic lesions relative to native ApoA-I and increased levels are seen with increasing severity of disease.</text>
</comment>
<comment type="PTM">
    <text evidence="1">Glycosylated.</text>
</comment>
<comment type="PTM">
    <text evidence="26">Palmitoylated.</text>
</comment>
<comment type="PTM">
    <text>Phosphorylation sites are present in the extracellular medium.</text>
</comment>
<comment type="mass spectrometry" mass="28081.0" method="Electrospray" evidence="7">
    <molecule>Apolipoprotein A-I</molecule>
    <text>Without methionine sulfoxide.</text>
</comment>
<comment type="mass spectrometry" mass="28098.0" method="Electrospray" evidence="7">
    <molecule>Apolipoprotein A-I</molecule>
    <text>With 1 methionine sulfoxide, oxidation at Met-110.</text>
</comment>
<comment type="mass spectrometry" mass="28095.0" method="Electrospray" evidence="7">
    <molecule>Apolipoprotein A-I</molecule>
    <text>With 1 methionine sulfoxide, oxidation at Met-136.</text>
</comment>
<comment type="mass spectrometry" mass="28114.0" method="Electrospray" evidence="7">
    <molecule>Apolipoprotein A-I</molecule>
    <text>With 2 methionine sulfoxides, oxidation at Met-110 and Met-136.</text>
</comment>
<comment type="polymorphism">
    <text evidence="41">Genetic variations in APOA1 can result in APOA1 deficiency and are associated with low levels of HDL cholesterol [MIM:107680].</text>
</comment>
<comment type="disease" evidence="14 15 38">
    <disease id="DI-05627">
        <name>Hypoalphalipoproteinemia, primary, 2</name>
        <acronym>FHA2</acronym>
        <description>An autosomal recessive disorder of lipoprotein metabolism, biochemically characterized by severe apoA-I deficiency and severely reduced serum high-density lipoprotein cholesterol (HDL-C). Affected individuals have undetectable serum levels of apoA-I, and develop xanthomas and corneal opacities. The disease is generally associated with atherosclerosis and markedly increased cardiovascular risk.</description>
        <dbReference type="MIM" id="618463"/>
    </disease>
    <text>The disease is caused by variants affecting the gene represented in this entry.</text>
</comment>
<comment type="disease" evidence="36">
    <disease id="DI-06397">
        <name>Hypoalphalipoproteinemia, primary, 2, intermediate</name>
        <acronym>FHA2I</acronym>
        <description>An autosomal dominant disorder of lipoprotein metabolism, biochemically characterized by partial apoA-I deficiency and reduced serum high-density lipoprotein cholesterol (HDL-C). Affected individuals have half the normal plasma apoA-I and HDL-C levels, and may develop xanthomas and corneal opacities. Most patients do not have increased cardiovascular risk.</description>
        <dbReference type="MIM" id="619836"/>
    </disease>
    <text>The disease is caused by variants affecting the gene represented in this entry.</text>
</comment>
<comment type="disease" evidence="33">
    <disease id="DI-06511">
        <name>Familial apolipoprotein gene cluster deletion syndrome</name>
        <acronym>FAPLDS</acronym>
        <description>An autosomal dominant disorder of lipoprotein metabolism. Affected individuals do not produce ApoA-I, ApoC-III and ApoA-IV lipoproteins, have marked plasma high density lipoprotein (HDL) deficiency, and manifest premature atherosclerosis and coronary artery disease.</description>
        <dbReference type="MIM" id="620058"/>
    </disease>
    <text>The gene represented in this entry is involved in disease pathogenesis.</text>
</comment>
<comment type="disease" evidence="3 4 6 10 20 27 35">
    <disease id="DI-06894">
        <name>Amyloidosis, hereditary systemic 3</name>
        <acronym>AMYLD3</acronym>
        <description>A form of hereditary systemic amyloidosis, a disorder characterized by amyloid deposition in multiple tissues resulting in a wide clinical spectrum. AMYLD3 clinical features include amyloid neuropathy, nephropathy, hepatopathy, and cardiomyopathy. Inheritance is autosomal dominant.</description>
        <dbReference type="MIM" id="620657"/>
    </disease>
    <text>The disease is caused by variants affecting the gene represented in this entry.</text>
</comment>
<comment type="similarity">
    <text evidence="41">Belongs to the apolipoprotein A1/A4/E family.</text>
</comment>
<reference key="1">
    <citation type="journal article" date="1983" name="Nucleic Acids Res.">
        <title>Gene structure of human apolipoprotein A1.</title>
        <authorList>
            <person name="Shoulders C.C."/>
            <person name="Kornblihtt A.R."/>
            <person name="Munro B.S."/>
            <person name="Baralle F.E."/>
        </authorList>
    </citation>
    <scope>NUCLEOTIDE SEQUENCE [GENOMIC DNA]</scope>
</reference>
<reference key="2">
    <citation type="journal article" date="1983" name="Nucleic Acids Res.">
        <title>Nucleotide sequence of cloned cDNA of human apolipoprotein A-I.</title>
        <authorList>
            <person name="Cheung P."/>
            <person name="Chan L."/>
        </authorList>
    </citation>
    <scope>NUCLEOTIDE SEQUENCE [GENOMIC DNA]</scope>
</reference>
<reference key="3">
    <citation type="journal article" date="1983" name="Proc. Natl. Acad. Sci. U.S.A.">
        <title>Isolation and characterization of the human apolipoprotein A-I gene.</title>
        <authorList>
            <person name="Karathanasis S.K."/>
            <person name="Zannis V.I."/>
            <person name="Breslow J.L."/>
        </authorList>
    </citation>
    <scope>NUCLEOTIDE SEQUENCE [GENOMIC DNA]</scope>
</reference>
<reference key="4">
    <citation type="journal article" date="1984" name="DNA">
        <title>Isolation and DNA sequence of full-length cDNA and of the entire gene for human apolipoprotein AI -- discovery of a new genetic polymorphism in the apo AI gene.</title>
        <authorList>
            <person name="Seilhamer J.J."/>
            <person name="Protter A.A."/>
            <person name="Frossard P."/>
            <person name="Levy-Wilson B."/>
        </authorList>
    </citation>
    <scope>NUCLEOTIDE SEQUENCE [GENOMIC DNA]</scope>
</reference>
<reference key="5">
    <citation type="journal article" date="1984" name="Nucleic Acids Res.">
        <title>Human apolipoproteins AI, AII, CII and CIII. cDNA sequences and mRNA abundance.</title>
        <authorList>
            <person name="Sharpe C.R."/>
            <person name="Sidoli A."/>
            <person name="Shelley C.S."/>
            <person name="Lucero M.A."/>
            <person name="Shoulders C.C."/>
            <person name="Baralle F.E."/>
        </authorList>
    </citation>
    <scope>NUCLEOTIDE SEQUENCE [GENOMIC DNA]</scope>
</reference>
<reference key="6">
    <citation type="journal article" date="1984" name="Proc. Natl. Acad. Sci. U.S.A.">
        <title>Nucleotide sequence and the encoded amino acids of human apolipoprotein A-I mRNA.</title>
        <authorList>
            <person name="Law S.W."/>
            <person name="Brewer H.B. Jr."/>
        </authorList>
    </citation>
    <scope>NUCLEOTIDE SEQUENCE [GENOMIC DNA]</scope>
</reference>
<reference key="7">
    <citation type="journal article" date="1985" name="J. Biol. Chem.">
        <title>Tangier disease. The complete mRNA sequence encoding for preproapo-A-I.</title>
        <authorList>
            <person name="Law S.W."/>
            <person name="Brewer H.B. Jr."/>
        </authorList>
    </citation>
    <scope>NUCLEOTIDE SEQUENCE [MRNA]</scope>
</reference>
<reference key="8">
    <citation type="journal article" date="1988" name="Eur. J. Biochem.">
        <title>Sequence and expression of Tangier apoA-I gene.</title>
        <authorList>
            <person name="Makrides S.C."/>
            <person name="Ruiz-Opazo N."/>
            <person name="Hayden M.R."/>
            <person name="Nussbaum A.L."/>
            <person name="Breslow J.L."/>
            <person name="Zannis V.I."/>
        </authorList>
    </citation>
    <scope>NUCLEOTIDE SEQUENCE [GENOMIC DNA] (VARIANT TANGIER)</scope>
</reference>
<reference key="9">
    <citation type="journal article" date="1989" name="DNA">
        <title>Production of human recombinant proapolipoprotein A-I in Escherichia coli: purification and biochemical characterization.</title>
        <authorList>
            <person name="Moguilevsky N."/>
            <person name="Roobol C."/>
            <person name="Loriau R."/>
            <person name="Guillaume J.P."/>
            <person name="Jacobs P."/>
            <person name="Cravador A."/>
            <person name="Herzog A."/>
            <person name="Brouwers L."/>
            <person name="Scarso A."/>
            <person name="Gilles P."/>
            <person name="Holmquist L."/>
            <person name="Carlson L.A."/>
            <person name="Bollen A."/>
        </authorList>
    </citation>
    <scope>NUCLEOTIDE SEQUENCE [MRNA]</scope>
</reference>
<reference key="10">
    <citation type="journal article" date="2004" name="Hum. Genet.">
        <title>The effects of scale: variation in the APOA1/C3/A4/A5 gene cluster.</title>
        <authorList>
            <person name="Fullerton S.M."/>
            <person name="Buchanan A.V."/>
            <person name="Sonpar V.A."/>
            <person name="Taylor S.L."/>
            <person name="Smith J.D."/>
            <person name="Carlson C.S."/>
            <person name="Salomaa V."/>
            <person name="Stengaard J.H."/>
            <person name="Boerwinkle E."/>
            <person name="Clark A.G."/>
            <person name="Nickerson D.A."/>
            <person name="Weiss K.M."/>
        </authorList>
    </citation>
    <scope>NUCLEOTIDE SEQUENCE [GENOMIC DNA]</scope>
    <scope>VARIANT THR-61</scope>
</reference>
<reference key="11">
    <citation type="patent" date="1988-11-30" number="EP0293357">
        <title>Expression of human proapolipoprotein A-1.</title>
        <authorList>
            <person name="Bollen A."/>
            <person name="Gobert J."/>
            <person name="Wuelfert E."/>
        </authorList>
    </citation>
    <scope>NUCLEOTIDE SEQUENCE [MRNA]</scope>
</reference>
<reference key="12">
    <citation type="journal article" date="2004" name="Nat. Genet.">
        <title>Complete sequencing and characterization of 21,243 full-length human cDNAs.</title>
        <authorList>
            <person name="Ota T."/>
            <person name="Suzuki Y."/>
            <person name="Nishikawa T."/>
            <person name="Otsuki T."/>
            <person name="Sugiyama T."/>
            <person name="Irie R."/>
            <person name="Wakamatsu A."/>
            <person name="Hayashi K."/>
            <person name="Sato H."/>
            <person name="Nagai K."/>
            <person name="Kimura K."/>
            <person name="Makita H."/>
            <person name="Sekine M."/>
            <person name="Obayashi M."/>
            <person name="Nishi T."/>
            <person name="Shibahara T."/>
            <person name="Tanaka T."/>
            <person name="Ishii S."/>
            <person name="Yamamoto J."/>
            <person name="Saito K."/>
            <person name="Kawai Y."/>
            <person name="Isono Y."/>
            <person name="Nakamura Y."/>
            <person name="Nagahari K."/>
            <person name="Murakami K."/>
            <person name="Yasuda T."/>
            <person name="Iwayanagi T."/>
            <person name="Wagatsuma M."/>
            <person name="Shiratori A."/>
            <person name="Sudo H."/>
            <person name="Hosoiri T."/>
            <person name="Kaku Y."/>
            <person name="Kodaira H."/>
            <person name="Kondo H."/>
            <person name="Sugawara M."/>
            <person name="Takahashi M."/>
            <person name="Kanda K."/>
            <person name="Yokoi T."/>
            <person name="Furuya T."/>
            <person name="Kikkawa E."/>
            <person name="Omura Y."/>
            <person name="Abe K."/>
            <person name="Kamihara K."/>
            <person name="Katsuta N."/>
            <person name="Sato K."/>
            <person name="Tanikawa M."/>
            <person name="Yamazaki M."/>
            <person name="Ninomiya K."/>
            <person name="Ishibashi T."/>
            <person name="Yamashita H."/>
            <person name="Murakawa K."/>
            <person name="Fujimori K."/>
            <person name="Tanai H."/>
            <person name="Kimata M."/>
            <person name="Watanabe M."/>
            <person name="Hiraoka S."/>
            <person name="Chiba Y."/>
            <person name="Ishida S."/>
            <person name="Ono Y."/>
            <person name="Takiguchi S."/>
            <person name="Watanabe S."/>
            <person name="Yosida M."/>
            <person name="Hotuta T."/>
            <person name="Kusano J."/>
            <person name="Kanehori K."/>
            <person name="Takahashi-Fujii A."/>
            <person name="Hara H."/>
            <person name="Tanase T.-O."/>
            <person name="Nomura Y."/>
            <person name="Togiya S."/>
            <person name="Komai F."/>
            <person name="Hara R."/>
            <person name="Takeuchi K."/>
            <person name="Arita M."/>
            <person name="Imose N."/>
            <person name="Musashino K."/>
            <person name="Yuuki H."/>
            <person name="Oshima A."/>
            <person name="Sasaki N."/>
            <person name="Aotsuka S."/>
            <person name="Yoshikawa Y."/>
            <person name="Matsunawa H."/>
            <person name="Ichihara T."/>
            <person name="Shiohata N."/>
            <person name="Sano S."/>
            <person name="Moriya S."/>
            <person name="Momiyama H."/>
            <person name="Satoh N."/>
            <person name="Takami S."/>
            <person name="Terashima Y."/>
            <person name="Suzuki O."/>
            <person name="Nakagawa S."/>
            <person name="Senoh A."/>
            <person name="Mizoguchi H."/>
            <person name="Goto Y."/>
            <person name="Shimizu F."/>
            <person name="Wakebe H."/>
            <person name="Hishigaki H."/>
            <person name="Watanabe T."/>
            <person name="Sugiyama A."/>
            <person name="Takemoto M."/>
            <person name="Kawakami B."/>
            <person name="Yamazaki M."/>
            <person name="Watanabe K."/>
            <person name="Kumagai A."/>
            <person name="Itakura S."/>
            <person name="Fukuzumi Y."/>
            <person name="Fujimori Y."/>
            <person name="Komiyama M."/>
            <person name="Tashiro H."/>
            <person name="Tanigami A."/>
            <person name="Fujiwara T."/>
            <person name="Ono T."/>
            <person name="Yamada K."/>
            <person name="Fujii Y."/>
            <person name="Ozaki K."/>
            <person name="Hirao M."/>
            <person name="Ohmori Y."/>
            <person name="Kawabata A."/>
            <person name="Hikiji T."/>
            <person name="Kobatake N."/>
            <person name="Inagaki H."/>
            <person name="Ikema Y."/>
            <person name="Okamoto S."/>
            <person name="Okitani R."/>
            <person name="Kawakami T."/>
            <person name="Noguchi S."/>
            <person name="Itoh T."/>
            <person name="Shigeta K."/>
            <person name="Senba T."/>
            <person name="Matsumura K."/>
            <person name="Nakajima Y."/>
            <person name="Mizuno T."/>
            <person name="Morinaga M."/>
            <person name="Sasaki M."/>
            <person name="Togashi T."/>
            <person name="Oyama M."/>
            <person name="Hata H."/>
            <person name="Watanabe M."/>
            <person name="Komatsu T."/>
            <person name="Mizushima-Sugano J."/>
            <person name="Satoh T."/>
            <person name="Shirai Y."/>
            <person name="Takahashi Y."/>
            <person name="Nakagawa K."/>
            <person name="Okumura K."/>
            <person name="Nagase T."/>
            <person name="Nomura N."/>
            <person name="Kikuchi H."/>
            <person name="Masuho Y."/>
            <person name="Yamashita R."/>
            <person name="Nakai K."/>
            <person name="Yada T."/>
            <person name="Nakamura Y."/>
            <person name="Ohara O."/>
            <person name="Isogai T."/>
            <person name="Sugano S."/>
        </authorList>
    </citation>
    <scope>NUCLEOTIDE SEQUENCE [LARGE SCALE MRNA]</scope>
    <source>
        <tissue>Testis</tissue>
    </source>
</reference>
<reference key="13">
    <citation type="submission" date="2007-02" db="EMBL/GenBank/DDBJ databases">
        <authorList>
            <consortium name="NHLBI resequencing and genotyping service (RS&amp;G)"/>
        </authorList>
    </citation>
    <scope>NUCLEOTIDE SEQUENCE [GENOMIC DNA]</scope>
</reference>
<reference key="14">
    <citation type="submission" date="2005-07" db="EMBL/GenBank/DDBJ databases">
        <authorList>
            <person name="Mural R.J."/>
            <person name="Istrail S."/>
            <person name="Sutton G.G."/>
            <person name="Florea L."/>
            <person name="Halpern A.L."/>
            <person name="Mobarry C.M."/>
            <person name="Lippert R."/>
            <person name="Walenz B."/>
            <person name="Shatkay H."/>
            <person name="Dew I."/>
            <person name="Miller J.R."/>
            <person name="Flanigan M.J."/>
            <person name="Edwards N.J."/>
            <person name="Bolanos R."/>
            <person name="Fasulo D."/>
            <person name="Halldorsson B.V."/>
            <person name="Hannenhalli S."/>
            <person name="Turner R."/>
            <person name="Yooseph S."/>
            <person name="Lu F."/>
            <person name="Nusskern D.R."/>
            <person name="Shue B.C."/>
            <person name="Zheng X.H."/>
            <person name="Zhong F."/>
            <person name="Delcher A.L."/>
            <person name="Huson D.H."/>
            <person name="Kravitz S.A."/>
            <person name="Mouchard L."/>
            <person name="Reinert K."/>
            <person name="Remington K.A."/>
            <person name="Clark A.G."/>
            <person name="Waterman M.S."/>
            <person name="Eichler E.E."/>
            <person name="Adams M.D."/>
            <person name="Hunkapiller M.W."/>
            <person name="Myers E.W."/>
            <person name="Venter J.C."/>
        </authorList>
    </citation>
    <scope>NUCLEOTIDE SEQUENCE [LARGE SCALE GENOMIC DNA]</scope>
</reference>
<reference key="15">
    <citation type="journal article" date="2004" name="Genome Res.">
        <title>The status, quality, and expansion of the NIH full-length cDNA project: the Mammalian Gene Collection (MGC).</title>
        <authorList>
            <consortium name="The MGC Project Team"/>
        </authorList>
    </citation>
    <scope>NUCLEOTIDE SEQUENCE [LARGE SCALE MRNA]</scope>
    <source>
        <tissue>Brain</tissue>
        <tissue>Skeletal muscle</tissue>
    </source>
</reference>
<reference key="16">
    <citation type="journal article" date="1983" name="Biochem. Biophys. Res. Commun.">
        <title>Human plasma proapoA-I: isolation and amino-terminal sequence.</title>
        <authorList>
            <person name="Brewer H.B. Jr."/>
            <person name="Fairwell T."/>
            <person name="Kay L."/>
            <person name="Meng M."/>
            <person name="Ronan R."/>
            <person name="Law S."/>
            <person name="Light J.A."/>
        </authorList>
    </citation>
    <scope>PROTEIN SEQUENCE OF 19-27</scope>
</reference>
<reference key="17">
    <citation type="journal article" date="1975" name="J. Biol. Chem.">
        <title>The primary structure of human plasma high density apolipoprotein glutamine I (ApoA-I). II. The amino acid sequence and alignment of cyanogen bromide fragments IV, III, and I.</title>
        <authorList>
            <person name="Baker H.N."/>
            <person name="Gotto A.M. Jr."/>
            <person name="Jackson R.L."/>
        </authorList>
    </citation>
    <scope>PROTEIN SEQUENCE OF 25-267</scope>
</reference>
<reference key="18">
    <citation type="journal article" date="1978" name="Biochem. Biophys. Res. Commun.">
        <title>The amino acid sequence of human APOA-I, an apolipoprotein isolated from high density lipoproteins.</title>
        <authorList>
            <person name="Brewer H.B. Jr."/>
            <person name="Fairwell T."/>
            <person name="Larue A."/>
            <person name="Ronan R."/>
            <person name="Houser A."/>
            <person name="Bronzert T.J."/>
        </authorList>
    </citation>
    <scope>PROTEIN SEQUENCE OF 25-267</scope>
</reference>
<reference key="19">
    <citation type="journal article" date="1988" name="J. Clin. Invest.">
        <title>Serum prostacyclin stabilizing factor is identical to apolipoprotein A-I (Apo A-I). A novel function of Apo A-I.</title>
        <authorList>
            <person name="Yui Y."/>
            <person name="Aoyama T."/>
            <person name="Morishita H."/>
            <person name="Takahashi M."/>
            <person name="Takatsu Y."/>
            <person name="Kawai C."/>
        </authorList>
    </citation>
    <scope>PROTEIN SEQUENCE OF 25-56</scope>
</reference>
<reference key="20">
    <citation type="journal article" date="1991" name="Biochemistry">
        <title>Identification of apolipoprotein A1 and immunoglobulin as components of a serum complex that mediates activation of human sperm motility.</title>
        <authorList>
            <person name="Aakerloef E."/>
            <person name="Joernvall H."/>
            <person name="Slotte H."/>
            <person name="Pousette A."/>
        </authorList>
    </citation>
    <scope>PROTEIN SEQUENCE OF 25-50</scope>
    <scope>FUNCTION</scope>
    <scope>IDENTIFICATION IN THE SPAP COMPLEX</scope>
    <source>
        <tissue>Serum</tissue>
    </source>
</reference>
<reference key="21">
    <citation type="journal article" date="1989" name="J. Biol. Chem.">
        <title>Apolipoprotein A-I binds to a family of bovine seminal plasma proteins.</title>
        <authorList>
            <person name="Manjunath P."/>
            <person name="Marcel Y.L."/>
            <person name="Uma J."/>
            <person name="Seidah N.G."/>
            <person name="Chretien M."/>
            <person name="Chapdelaine A."/>
        </authorList>
    </citation>
    <scope>PROTEIN SEQUENCE OF 25-48</scope>
</reference>
<reference key="22">
    <citation type="journal article" date="1987" name="Science">
        <title>Similarity of cruzin, an inhibitor of Trypanosoma cruzi neuraminidase, to high-density lipoprotein.</title>
        <authorList>
            <person name="Prioli R.P."/>
            <person name="Ordovas J.M."/>
            <person name="Rosenberg I."/>
            <person name="Schaeffer E.J."/>
            <person name="Pereira M.E.A."/>
        </authorList>
    </citation>
    <scope>PROTEIN SEQUENCE OF 25-43</scope>
</reference>
<reference key="23">
    <citation type="journal article" date="1994" name="Electrophoresis">
        <title>The human myocardial two-dimensional gel protein database: update 1994.</title>
        <authorList>
            <person name="Corbett J.M."/>
            <person name="Wheeler C.H."/>
            <person name="Baker C.S."/>
            <person name="Yacoub M.H."/>
            <person name="Dunn M.J."/>
        </authorList>
    </citation>
    <scope>PROTEIN SEQUENCE OF 25-42</scope>
    <source>
        <tissue>Heart</tissue>
    </source>
</reference>
<reference key="24">
    <citation type="journal article" date="2003" name="Nat. Biotechnol.">
        <title>Exploring proteomes and analyzing protein processing by mass spectrometric identification of sorted N-terminal peptides.</title>
        <authorList>
            <person name="Gevaert K."/>
            <person name="Goethals M."/>
            <person name="Martens L."/>
            <person name="Van Damme J."/>
            <person name="Staes A."/>
            <person name="Thomas G.R."/>
            <person name="Vandekerckhove J."/>
        </authorList>
    </citation>
    <scope>PROTEIN SEQUENCE OF 25-34</scope>
    <source>
        <tissue>Platelet</tissue>
    </source>
</reference>
<reference key="25">
    <citation type="journal article" date="1991" name="Biochim. Biophys. Acta">
        <title>The apolipoprotein A-I binding protein of placenta and the SP-40,40 protein of human blood are different proteins which both bind to apolipoprotein A-I.</title>
        <authorList>
            <person name="Ehnholm C."/>
            <person name="Bozas S.E."/>
            <person name="Tenkanen H."/>
            <person name="Kirszbaum L."/>
            <person name="Metso J."/>
            <person name="Murphy B."/>
            <person name="Walker I.D."/>
        </authorList>
    </citation>
    <scope>PROTEIN SEQUENCE OF 25-33</scope>
    <scope>INTERACTION WITH NAXE AND CLU</scope>
</reference>
<reference key="26">
    <citation type="submission" date="2008-12" db="UniProtKB">
        <authorList>
            <person name="Lubec G."/>
            <person name="Vishwanath V."/>
            <person name="Chen W.-Q."/>
            <person name="Sun Y."/>
        </authorList>
    </citation>
    <scope>PROTEIN SEQUENCE OF 35-64; 70-101; 121-140; 165-173; 185-195 AND 240-263</scope>
    <scope>IDENTIFICATION BY MASS SPECTROMETRY</scope>
    <source>
        <tissue>Brain</tissue>
        <tissue>Cajal-Retzius cell</tissue>
        <tissue>Fetal brain cortex</tissue>
    </source>
</reference>
<reference key="27">
    <citation type="journal article" date="1982" name="Arteriosclerosis">
        <title>Plasma apolipoprotein A-1 absence associated with a marked reduction of high density lipoproteins and premature coronary artery disease.</title>
        <authorList>
            <person name="Schaefer E.J."/>
            <person name="Heaton W.H."/>
            <person name="Wetzel M.G."/>
            <person name="Brewer H.B. Jr."/>
        </authorList>
    </citation>
    <scope>INVOLVEMENT IN FAPLDS</scope>
</reference>
<reference key="28">
    <citation type="journal article" date="1982" name="Proc. Natl. Acad. Sci. U.S.A.">
        <title>Isolation and characterization of cDNA clones for human apolipoprotein A-I.</title>
        <authorList>
            <person name="Breslow J.L."/>
            <person name="Ross D."/>
            <person name="McPherson J."/>
            <person name="Williams H.W."/>
            <person name="Kurnit D."/>
            <person name="Nussbaum A.L."/>
            <person name="Karathanasis S.K."/>
            <person name="Zannis V.I."/>
        </authorList>
    </citation>
    <scope>NUCLEOTIDE SEQUENCE [MRNA] OF 118-267</scope>
</reference>
<reference key="29">
    <citation type="journal article" date="1986" name="J. Biol. Chem.">
        <title>Human apolipoprotein A-I. Post-translational modification by fatty acid acylation.</title>
        <authorList>
            <person name="Hoeg J.M."/>
            <person name="Meng M.S."/>
            <person name="Ronan R."/>
            <person name="Fairwell T."/>
            <person name="Brewer H.B. Jr."/>
        </authorList>
    </citation>
    <scope>PALMITOYLATION</scope>
</reference>
<reference key="30">
    <citation type="journal article" date="1983" name="Proc. Natl. Acad. Sci. U.S.A.">
        <title>Intracellular and extracellular processing of human apolipoprotein A-I: secreted apolipoprotein A-I isoprotein 2 is a propeptide.</title>
        <authorList>
            <person name="Zannis V.I."/>
            <person name="Karathanasis S.K."/>
            <person name="Keutmann H.T."/>
            <person name="Goldberger G."/>
            <person name="Breslow J.L."/>
        </authorList>
    </citation>
    <scope>PROTEOLYTIC PROCESSING</scope>
</reference>
<reference key="31">
    <citation type="journal article" date="1991" name="J. Clin. Invest.">
        <title>A frameshift mutation in the human apolipoprotein A-I gene causes high density lipoprotein deficiency, partial lecithin: cholesterol-acyltransferase deficiency, and corneal opacities.</title>
        <authorList>
            <person name="Funke H."/>
            <person name="von Eckardstein A."/>
            <person name="Pritchard P.H."/>
            <person name="Karas M."/>
            <person name="Albers J.J."/>
            <person name="Assmann G."/>
        </authorList>
    </citation>
    <scope>INVOLVEMENT IN FHA2</scope>
</reference>
<reference key="32">
    <citation type="journal article" date="1993" name="Clin. Chim. Acta">
        <title>The preferential site of non-enzymatic glycation of human apolipoprotein A-I in vivo.</title>
        <authorList>
            <person name="Calvo C."/>
            <person name="Ulloa N."/>
            <person name="Campos M."/>
            <person name="Verdugo C."/>
            <person name="Ayrault-Jarrier M."/>
        </authorList>
    </citation>
    <scope>GLYCATION AT LYS-263</scope>
</reference>
<reference key="33">
    <citation type="journal article" date="2002" name="Genomics">
        <title>Cloning and characterization of a novel apolipoprotein A-I-binding protein, AI-BP, secreted by cells of the kidney proximal tubules in response to HDL or ApoA-I.</title>
        <authorList>
            <person name="Ritter M."/>
            <person name="Buechler C."/>
            <person name="Boettcher A."/>
            <person name="Barlage S."/>
            <person name="Schmitz-Madry A."/>
            <person name="Orso E."/>
            <person name="Bared S.M."/>
            <person name="Schmiedeknecht G."/>
            <person name="Baehr C.H."/>
            <person name="Fricker G."/>
            <person name="Schmitz G."/>
        </authorList>
    </citation>
    <scope>INTERACTION WITH NAXE</scope>
</reference>
<reference key="34">
    <citation type="journal article" date="2003" name="J. Immunol.">
        <title>Identification of uteroglobin-related protein 1 and macrophage scavenger receptor with collagenous structure as a lung-specific ligand-receptor pair.</title>
        <authorList>
            <person name="Bin L.H."/>
            <person name="Nielson L.D."/>
            <person name="Liu X."/>
            <person name="Mason R.J."/>
            <person name="Shu H.B."/>
        </authorList>
    </citation>
    <scope>INTERACTION WITH SCGB3A2</scope>
</reference>
<reference key="35">
    <citation type="journal article" date="2003" name="J. Lipid Res.">
        <title>Characterization of specifically oxidized apolipoproteins in mildly oxidized high density lipoprotein.</title>
        <authorList>
            <person name="Pankhurst G."/>
            <person name="Wang X.L."/>
            <person name="Wilcken D.E."/>
            <person name="Baernthaler G."/>
            <person name="Panzenboeck U."/>
            <person name="Raftery M."/>
            <person name="Stocker R."/>
        </authorList>
    </citation>
    <scope>MASS SPECTROMETRY</scope>
    <scope>OXIDATION AT MET-110 AND MET-136</scope>
    <scope>TISSUE SPECIFICITY</scope>
</reference>
<reference key="36">
    <citation type="journal article" date="2003" name="J. Lipid Res.">
        <title>Novel mass spectrometric immunoassays for the rapid structural characterization of plasma apolipoproteins.</title>
        <authorList>
            <person name="Niederkofler E.E."/>
            <person name="Tubbs K.A."/>
            <person name="Kiernan U.A."/>
            <person name="Nedelkov D."/>
            <person name="Nelson R.W."/>
        </authorList>
    </citation>
    <scope>IDENTIFICATION BY MASS SPECTROMETRY</scope>
</reference>
<reference key="37">
    <citation type="journal article" date="2005" name="Biochem. Biophys. Res. Commun.">
        <title>NDRG1 interacts with APO A-I and A-II and is a functional candidate for the HDL-C QTL on 8q24.</title>
        <authorList>
            <person name="Hunter M."/>
            <person name="Angelicheva D."/>
            <person name="Tournev I."/>
            <person name="Ingley E."/>
            <person name="Chan D.C."/>
            <person name="Watts G.F."/>
            <person name="Kremensky I."/>
            <person name="Kalaydjieva L."/>
        </authorList>
    </citation>
    <scope>INTERACTION WITH NDRG1</scope>
</reference>
<reference key="38">
    <citation type="journal article" date="2011" name="BMC Syst. Biol.">
        <title>Initial characterization of the human central proteome.</title>
        <authorList>
            <person name="Burkard T.R."/>
            <person name="Planyavsky M."/>
            <person name="Kaupe I."/>
            <person name="Breitwieser F.P."/>
            <person name="Buerckstuemmer T."/>
            <person name="Bennett K.L."/>
            <person name="Superti-Furga G."/>
            <person name="Colinge J."/>
        </authorList>
    </citation>
    <scope>IDENTIFICATION BY MASS SPECTROMETRY [LARGE SCALE ANALYSIS]</scope>
</reference>
<reference key="39">
    <citation type="journal article" date="2013" name="Nature">
        <title>Control of angiogenesis by AIBP-mediated cholesterol efflux.</title>
        <authorList>
            <person name="Fang L."/>
            <person name="Choi S.H."/>
            <person name="Baek J.S."/>
            <person name="Liu C."/>
            <person name="Almazan F."/>
            <person name="Ulrich F."/>
            <person name="Wiesner P."/>
            <person name="Taleb A."/>
            <person name="Deer E."/>
            <person name="Pattison J."/>
            <person name="Torres-Vazquez J."/>
            <person name="Li A.C."/>
            <person name="Miller Y.I."/>
        </authorList>
    </citation>
    <scope>INTERACTION WITH NAXE AND YJEFN3</scope>
</reference>
<reference key="40">
    <citation type="journal article" date="2014" name="J. Proteomics">
        <title>An enzyme assisted RP-RPLC approach for in-depth analysis of human liver phosphoproteome.</title>
        <authorList>
            <person name="Bian Y."/>
            <person name="Song C."/>
            <person name="Cheng K."/>
            <person name="Dong M."/>
            <person name="Wang F."/>
            <person name="Huang J."/>
            <person name="Sun D."/>
            <person name="Wang L."/>
            <person name="Ye M."/>
            <person name="Zou H."/>
        </authorList>
    </citation>
    <scope>IDENTIFICATION BY MASS SPECTROMETRY [LARGE SCALE ANALYSIS]</scope>
    <source>
        <tissue>Liver</tissue>
    </source>
</reference>
<reference key="41">
    <citation type="journal article" date="2014" name="PLoS ONE">
        <title>Secondary structure changes in ApoA-I Milano (R173C) are not accompanied by a decrease in protein stability or solubility.</title>
        <authorList>
            <person name="Petrlova J."/>
            <person name="Dalla-Riva J."/>
            <person name="Morgelin M."/>
            <person name="Lindahl M."/>
            <person name="Krupinska E."/>
            <person name="Stenkula K.G."/>
            <person name="Voss J.C."/>
            <person name="Lagerstedt J.O."/>
        </authorList>
    </citation>
    <scope>CHARACTERIZATION OF VARIANT MILANO CYS-197</scope>
</reference>
<reference key="42">
    <citation type="journal article" date="1996" name="Biochim. Biophys. Acta">
        <title>Conformation of human serum apolipoprotein A-I(166-185) in the presence of sodium dodecyl sulfate or dodecylphosphocholine by 1H-NMR and CD. Evidence for specific peptide-SDS interactions.</title>
        <authorList>
            <person name="Wang G."/>
            <person name="Treleaven W.D."/>
            <person name="Cushley R.J."/>
        </authorList>
    </citation>
    <scope>STRUCTURE BY NMR OF 190-209</scope>
</reference>
<reference key="43">
    <citation type="journal article" date="1997" name="Proc. Natl. Acad. Sci. U.S.A.">
        <title>Crystal structure of truncated human apolipoprotein A-I suggests a lipid-bound conformation.</title>
        <authorList>
            <person name="Borhani D.W."/>
            <person name="Rogers D.P."/>
            <person name="Engler J.A."/>
            <person name="Brouillette C.G."/>
        </authorList>
    </citation>
    <scope>X-RAY CRYSTALLOGRAPHY (4.0 ANGSTROMS) OF 67-267</scope>
</reference>
<reference key="44">
    <citation type="journal article" date="1993" name="Biochem. Biophys. Res. Commun.">
        <title>Autosomal dominant hypoalphalipoproteinemia due to a completely defective apolipoprotein A-I gene.</title>
        <authorList>
            <person name="Nakata K."/>
            <person name="Kobayashi K."/>
            <person name="Yanagi H."/>
            <person name="Shimakura Y."/>
            <person name="Tsuchiya S."/>
            <person name="Arinami T."/>
            <person name="Hamaguchi H."/>
        </authorList>
    </citation>
    <scope>INVOLVEMENT IN FHA2I</scope>
</reference>
<reference key="45">
    <citation type="journal article" date="1994" name="J. Clin. Invest.">
        <title>Apolipoprotein A-I Q[-2]X causing isolated apolipoprotein A-I deficiency in a family with analphalipoproteinemia.</title>
        <authorList>
            <person name="Ng D.S."/>
            <person name="Leiter L.A."/>
            <person name="Vezina C."/>
            <person name="Connelly P.W."/>
            <person name="Hegele R.A."/>
        </authorList>
    </citation>
    <scope>INVOLVEMENT IN FHA2</scope>
    <scope>VARIANT FHA2 23-GLN--GLN-267 DEL</scope>
    <scope>CHARACTERIZATION OF VARIANT FHA2 23-GLN--GLN-267 DEL</scope>
</reference>
<reference key="46">
    <citation type="journal article" date="1983" name="J. Biol. Chem.">
        <title>Apolipoprotein A-IMilano. Detection of normal A-I in affected subjects and evidence for a cysteine for arginine substitution in the variant A-I.</title>
        <authorList>
            <person name="Weisgraber K.H."/>
            <person name="Rall S.C. Jr."/>
            <person name="Bersot T.P."/>
            <person name="Mahley R.W."/>
            <person name="Franceschini G."/>
            <person name="Sirtori C.R."/>
        </authorList>
    </citation>
    <scope>VARIANT MILANO CYS-197</scope>
</reference>
<reference key="47">
    <citation type="journal article" date="1983" name="Proc. Natl. Acad. Sci. U.S.A.">
        <title>Tangier disease: defective recombination of a specific Tangier apolipoprotein A-I isoform (pro-apo A-I) with high density lipoproteins.</title>
        <authorList>
            <person name="Schmitz G."/>
            <person name="Assmann G."/>
            <person name="Rall S.C. Jr."/>
            <person name="Mahley R.W."/>
        </authorList>
    </citation>
    <scope>INVOLVEMENT IN TANGIER DISEASE</scope>
</reference>
<reference key="48">
    <citation type="journal article" date="1984" name="Eur. J. Biochem.">
        <title>Apolipoprotein A-IGiessen (Pro143--&gt;Arg). A mutant that is defective in activating lecithin:cholesterol acyltransferase.</title>
        <authorList>
            <person name="Utermann G."/>
            <person name="Haas J."/>
            <person name="Steinmetz A."/>
            <person name="Paetzold R."/>
            <person name="Rall S.C. Jr."/>
            <person name="Weisgraber K.H."/>
            <person name="Mahley R.W."/>
        </authorList>
    </citation>
    <scope>VARIANT GIESSEN ARG-167</scope>
</reference>
<reference key="49">
    <citation type="journal article" date="1984" name="J. Biol. Chem.">
        <title>Abnormal lecithin:cholesterol acyltransferase activation by a human apolipoprotein A-I variant in which a single lysine residue is deleted.</title>
        <authorList>
            <person name="Rall S.C. Jr."/>
            <person name="Weisgraber K.H."/>
            <person name="Mahley R.W."/>
            <person name="Ogawa Y."/>
            <person name="Fielding C.J."/>
            <person name="Utermann G."/>
            <person name="Haas J."/>
            <person name="Steinmetz A."/>
            <person name="Menzel H.J."/>
            <person name="Assmann G."/>
        </authorList>
    </citation>
    <scope>VARIANT NORWAY LYS-160</scope>
</reference>
<reference key="50">
    <citation type="journal article" date="1988" name="Biochem. Biophys. Res. Commun.">
        <title>Variant apolipoprotein AI as a major constituent of a human hereditary amyloid.</title>
        <authorList>
            <person name="Nichols W.C."/>
            <person name="Dwulet F.E."/>
            <person name="Liepnieks J."/>
            <person name="Benson M.D."/>
        </authorList>
    </citation>
    <scope>PROTEIN SEQUENCE OF 25-107</scope>
    <scope>VARIANT AMYLD3 ARG-50</scope>
</reference>
<reference key="51">
    <citation type="journal article" date="1990" name="Genomics">
        <title>A mutation in apolipoprotein A-I in the Iowa type of familial amyloidotic polyneuropathy.</title>
        <authorList>
            <person name="Nichols W.C."/>
            <person name="Gregg R.E."/>
            <person name="Brewer H.B. Jr."/>
            <person name="Benson M.D."/>
        </authorList>
    </citation>
    <scope>VARIANT AMYLD3 ARG-50</scope>
    <scope>INVOLVEMENT IN AMYLD3</scope>
</reference>
<reference key="52">
    <citation type="journal article" date="1990" name="Biochim. Biophys. Acta">
        <title>Isolation and characterization of human apolipoprotein A-I Fukuoka (110 Glu--&gt;Lys). A novel apolipoprotein variant.</title>
        <authorList>
            <person name="Takada Y."/>
            <person name="Sasaki J."/>
            <person name="Ogata S."/>
            <person name="Nakanishi T."/>
            <person name="Ikehara Y."/>
            <person name="Arakawa K."/>
        </authorList>
    </citation>
    <scope>PROTEIN SEQUENCE OF 25-267</scope>
    <scope>VARIANT FUKUOKA LYS-134</scope>
</reference>
<reference key="53">
    <citation type="journal article" date="1992" name="Proc. Natl. Acad. Sci. U.S.A.">
        <title>Apolipoprotein AI mutation Arg-60 causes autosomal dominant amyloidosis.</title>
        <authorList>
            <person name="Soutar A.K."/>
            <person name="Hawkins P.N."/>
            <person name="Vigushin D.M."/>
            <person name="Tennent G.A."/>
            <person name="Booth S.E."/>
            <person name="Hutton T."/>
            <person name="Nguyen O."/>
            <person name="Totty N.F."/>
            <person name="Feest T.G."/>
            <person name="Hsuan J.J."/>
            <person name="Pepys M.B."/>
        </authorList>
    </citation>
    <scope>PROTEIN SEQUENCE OF 25-112</scope>
    <scope>VARIANT AMYLD3 ARG-84</scope>
    <scope>INVOLVEMENT IN AMYLD3</scope>
</reference>
<reference key="54">
    <citation type="journal article" date="1990" name="Hum. Genet.">
        <title>Apolipoprotein A1 Baltimore (Arg-10--&gt;Leu), a new ApoA1 variant.</title>
        <authorList>
            <person name="Ladias J.A.A."/>
            <person name="Kwiterovich P.O. Jr."/>
            <person name="Smith H.H."/>
            <person name="Karathanasis S.K."/>
            <person name="Antonarakis S.E."/>
        </authorList>
    </citation>
    <scope>VARIANT BALTIMORE LEU-34</scope>
</reference>
<reference key="55">
    <citation type="journal article" date="1989" name="J. Clin. Invest.">
        <title>Apolipoprotein A-I variants. Naturally occurring substitutions of proline residues affect plasma concentration of apolipoprotein A-I.</title>
        <authorList>
            <person name="von Eckardstein A."/>
            <person name="Funke H."/>
            <person name="Henke A."/>
            <person name="Altland K."/>
            <person name="Benninghoven A."/>
            <person name="Assmann G."/>
            <person name="Welp S."/>
            <person name="Roetrige A."/>
            <person name="Kock R."/>
        </authorList>
    </citation>
    <scope>VARIANTS ARG-27; ARG-28 AND ARG-189</scope>
</reference>
<reference key="56">
    <citation type="journal article" date="1990" name="J. Biol. Chem.">
        <title>Structural analysis of human apolipoprotein A-I variants. Amino acid substitutions are nonrandomly distributed throughout the apolipoprotein A-I primary structure.</title>
        <authorList>
            <person name="von Eckardstein A."/>
            <person name="Funke H."/>
            <person name="Walter M."/>
            <person name="Altland K."/>
            <person name="Benninghoven A."/>
            <person name="Assmann G."/>
        </authorList>
    </citation>
    <scope>VARIANTS GLU-113; MET-131; GLY-163; VAL-171 AND LYS-222</scope>
</reference>
<reference key="57">
    <citation type="journal article" date="1991" name="Proc. Natl. Acad. Sci. U.S.A.">
        <title>Apolipoprotein A-I deficiency due to a codon 84 nonsense mutation of the apolipoprotein A-I gene.</title>
        <authorList>
            <person name="Matsunaga T."/>
            <person name="Hiasa Y."/>
            <person name="Yanagi H."/>
            <person name="Maeda T."/>
            <person name="Hattori N."/>
            <person name="Yamakawa K."/>
            <person name="Yamanouchi Y."/>
            <person name="Tanaka I."/>
            <person name="Obara T."/>
            <person name="Hamaguchi H."/>
        </authorList>
    </citation>
    <scope>VARIANT FHA2 108-GLN--GLN-267 DEL</scope>
    <scope>CHARACTERIZATION OF VARIANT FHA2 108-GLN--GLN-267 DEL</scope>
    <scope>VARIANT THR-61</scope>
</reference>
<reference key="58">
    <citation type="journal article" date="1994" name="Arterioscler. Thromb.">
        <title>A nonsense mutation in the apolipoprotein A-I gene is associated with high-density lipoprotein deficiency and periorbital xanthelasmas.</title>
        <authorList>
            <person name="Roemling R."/>
            <person name="von Eckardstein A."/>
            <person name="Funke H."/>
            <person name="Motti C."/>
            <person name="Fragiacomo G.C."/>
            <person name="Noseda G."/>
            <person name="Assmann G."/>
        </authorList>
    </citation>
    <scope>VARIANT HDL DEFICIENCY 56-GLN--GLN-267 DEL</scope>
    <scope>CHARACTERIZATION OF VARIANT HDL DEFICIENCY 56-GLN--GLN-267 DEL</scope>
</reference>
<reference key="59">
    <citation type="journal article" date="1994" name="Biochim. Biophys. Acta">
        <title>Characterization of two new human apolipoprotein A-I variants: apolipoprotein A-I Tsushima (Trp-108--&gt;Arg) and A-I Hita (Ala-95--&gt;Asp).</title>
        <authorList>
            <person name="Araki K."/>
            <person name="Sasaki J."/>
            <person name="Matsunaga A."/>
            <person name="Takada Y."/>
            <person name="Moriyama K."/>
            <person name="Hidaka K."/>
            <person name="Arakawa K."/>
        </authorList>
    </citation>
    <scope>VARIANTS HITA AND TSUSHIMA</scope>
</reference>
<reference key="60">
    <citation type="journal article" date="1994" name="Q. J. Med.">
        <title>Familial nephropathic systemic amyloidosis caused by apolipoprotein AI variant Arg26.</title>
        <authorList>
            <person name="Vigushin D.M."/>
            <person name="Gough J."/>
            <person name="Allan D."/>
            <person name="Alguacil A."/>
            <person name="Penner B."/>
            <person name="Pettigrew N.M."/>
            <person name="Quinonez G."/>
            <person name="Bernstein K."/>
            <person name="Booth S.E."/>
            <person name="Booth D.R."/>
            <person name="Soutar A.K."/>
            <person name="Hawkins P.N."/>
            <person name="Pepys M.B."/>
        </authorList>
    </citation>
    <scope>VARIANT AMYLD3 ARG-50</scope>
    <scope>INVOLVEMENT IN AMYLD3</scope>
</reference>
<reference key="61">
    <citation type="journal article" date="1999" name="Am. J. Pathol.">
        <title>The new apolipoprotein A-I variant leu(174) --&gt; Ser causes hereditary cardiac amyloidosis, and the amyloid fibrils are constituted by the 93-residue N-terminal polypeptide.</title>
        <authorList>
            <person name="Obici L."/>
            <person name="Bellotti V."/>
            <person name="Mangione P."/>
            <person name="Stoppini M."/>
            <person name="Arbustini E."/>
            <person name="Verga L."/>
            <person name="Zorzoli I."/>
            <person name="Anesi E."/>
            <person name="Zanotti G."/>
            <person name="Campana C."/>
            <person name="Vigano M."/>
            <person name="Merlini G."/>
        </authorList>
    </citation>
    <scope>VARIANT AMYLD3 SER-198</scope>
    <scope>CHARACTERIZATION OF VARIANT AMYLD3 SER-198</scope>
    <scope>INVOLVEMENT IN AMYLD3</scope>
</reference>
<reference key="62">
    <citation type="journal article" date="1998" name="Arterioscler. Thromb. Vasc. Biol.">
        <title>A novel homozygous missense mutation in the apo A-I gene with apo A-I deficiency.</title>
        <authorList>
            <person name="Huang W."/>
            <person name="Sasaki J."/>
            <person name="Matsunaga A."/>
            <person name="Nanimatsu H."/>
            <person name="Moriyama K."/>
            <person name="Han H."/>
            <person name="Kugi M."/>
            <person name="Koga T."/>
            <person name="Yamaguchi K."/>
            <person name="Arakawa K."/>
        </authorList>
    </citation>
    <scope>VARIANT AOITA GLU-180</scope>
</reference>
<reference key="63">
    <citation type="journal article" date="1998" name="Hum. Mutat.">
        <title>Apo A-I Zaragoza(L144R): a novel mutation in the apolipoprotein A-I gene associated with familial hypoalphalipoproteinemia.</title>
        <authorList>
            <person name="Recalde D."/>
            <person name="Cenarro A."/>
            <person name="Civeira F."/>
            <person name="Pocovi M."/>
        </authorList>
    </citation>
    <scope>VARIANT ZARAGOZA ARG-168</scope>
</reference>
<reference key="64">
    <citation type="journal article" date="1999" name="Biochem. Biophys. Res. Commun.">
        <title>A novel apolipoprotein A-1 variant, Arg173Pro, associated with cardiac and cutaneous amyloidosis.</title>
        <authorList>
            <person name="Hamidi Asl K."/>
            <person name="Liepnieks J.J."/>
            <person name="Nakamura M."/>
            <person name="Parker F."/>
            <person name="Benson M.D."/>
        </authorList>
    </citation>
    <scope>VARIANT AMYLD3 PRO-173</scope>
    <scope>INVOLVEMENT IN AMYLD3</scope>
</reference>
<reference key="65">
    <citation type="journal article" date="2002" name="N. Engl. J. Med.">
        <title>Misdiagnosis of hereditary amyloidosis as AL (primary) amyloidosis.</title>
        <authorList>
            <person name="Lachmann H.J."/>
            <person name="Booth D.R."/>
            <person name="Booth S.E."/>
            <person name="Bybee A."/>
            <person name="Gilbertson J.A."/>
            <person name="Gillmore J.D."/>
            <person name="Pepys M.B."/>
            <person name="Hawkins P.N."/>
        </authorList>
    </citation>
    <scope>VARIANTS AMYLD3 ARG-50 AND PRO-199</scope>
    <scope>INVOLVEMENT IN AMYLD3</scope>
</reference>
<reference key="66">
    <citation type="journal article" date="2003" name="Hum. Mol. Genet.">
        <title>Association of extreme blood lipid profile phenotypic variation with 11 reverse cholesterol transport genes and 10 non-genetic cardiovascular disease risk factors.</title>
        <authorList>
            <person name="Morabia A."/>
            <person name="Cayanis E."/>
            <person name="Costanza M.C."/>
            <person name="Ross B.M."/>
            <person name="Flaherty M.S."/>
            <person name="Alvin G.B."/>
            <person name="Das K."/>
            <person name="Gilliam T.C."/>
        </authorList>
    </citation>
    <scope>VARIANT ILE-92</scope>
</reference>
<reference key="67">
    <citation type="journal article" date="2011" name="J. Mol. Cell Biol.">
        <title>Quantitative detection of single amino acid polymorphisms by targeted proteomics.</title>
        <authorList>
            <person name="Su Z.D."/>
            <person name="Sun L."/>
            <person name="Yu D.X."/>
            <person name="Li R.X."/>
            <person name="Li H.X."/>
            <person name="Yu Z.J."/>
            <person name="Sheng Q.H."/>
            <person name="Lin X."/>
            <person name="Zeng R."/>
            <person name="Wu J.R."/>
        </authorList>
    </citation>
    <scope>VARIANT ILE-92</scope>
    <scope>IDENTIFICATION BY MASS SPECTROMETRY</scope>
</reference>
<reference key="68">
    <citation type="journal article" date="2015" name="J. Clin. Lipidol.">
        <title>Case report: A novel apolipoprotein A-I missense mutation apoA-I (Arg149Ser)Boston associated with decreased lecithin-cholesterol acyltransferase activation and cellular cholesterol efflux.</title>
        <authorList>
            <person name="Anthanont P."/>
            <person name="Asztalos B.F."/>
            <person name="Polisecki E."/>
            <person name="Zachariah B."/>
            <person name="Schaefer E.J."/>
        </authorList>
    </citation>
    <scope>VARIANT BOSTON SER-173</scope>
</reference>
<sequence length="267" mass="30778">MKAAVLTLAVLFLTGSQARHFWQQDEPPQSPWDRVKDLATVYVDVLKDSGRDYVSQFEGSALGKQLNLKLLDNWDSVTSTFSKLREQLGPVTQEFWDNLEKETEGLRQEMSKDLEEVKAKVQPYLDDFQKKWQEEMELYRQKVEPLRAELQEGARQKLHELQEKLSPLGEEMRDRARAHVDALRTHLAPYSDELRQRLAARLEALKENGGARLAEYHAKATEHLSTLSEKAKPALEDLRQGLLPVLESFKVSFLSALEEYTKKLNTQ</sequence>